<keyword id="KW-0007">Acetylation</keyword>
<keyword id="KW-0010">Activator</keyword>
<keyword id="KW-0013">ADP-ribosylation</keyword>
<keyword id="KW-0025">Alternative splicing</keyword>
<keyword id="KW-0067">ATP-binding</keyword>
<keyword id="KW-0090">Biological rhythms</keyword>
<keyword id="KW-0131">Cell cycle</keyword>
<keyword id="KW-0132">Cell division</keyword>
<keyword id="KW-0137">Centromere</keyword>
<keyword id="KW-0156">Chromatin regulator</keyword>
<keyword id="KW-0158">Chromosome</keyword>
<keyword id="KW-0164">Citrullination</keyword>
<keyword id="KW-0963">Cytoplasm</keyword>
<keyword id="KW-0206">Cytoskeleton</keyword>
<keyword id="KW-0217">Developmental protein</keyword>
<keyword id="KW-0221">Differentiation</keyword>
<keyword id="KW-0903">Direct protein sequencing</keyword>
<keyword id="KW-0225">Disease variant</keyword>
<keyword id="KW-0238">DNA-binding</keyword>
<keyword id="KW-0887">Epilepsy</keyword>
<keyword id="KW-0945">Host-virus interaction</keyword>
<keyword id="KW-1017">Isopeptide bond</keyword>
<keyword id="KW-0995">Kinetochore</keyword>
<keyword id="KW-0488">Methylation</keyword>
<keyword id="KW-0498">Mitosis</keyword>
<keyword id="KW-0507">mRNA processing</keyword>
<keyword id="KW-0508">mRNA splicing</keyword>
<keyword id="KW-0547">Nucleotide-binding</keyword>
<keyword id="KW-0539">Nucleus</keyword>
<keyword id="KW-0597">Phosphoprotein</keyword>
<keyword id="KW-1267">Proteomics identification</keyword>
<keyword id="KW-1185">Reference proteome</keyword>
<keyword id="KW-0678">Repressor</keyword>
<keyword id="KW-0687">Ribonucleoprotein</keyword>
<keyword id="KW-0694">RNA-binding</keyword>
<keyword id="KW-0747">Spliceosome</keyword>
<keyword id="KW-0804">Transcription</keyword>
<keyword id="KW-0805">Transcription regulation</keyword>
<keyword id="KW-0832">Ubl conjugation</keyword>
<accession>Q00839</accession>
<accession>O75507</accession>
<accession>Q8N174</accession>
<accession>Q96HY9</accession>
<accession>Q9BQ09</accession>
<comment type="function">
    <text evidence="2 7 8 9 10 12 16 17 20 21 22 23 24 27 28 31 35 37 39 40 43 44 46 47 48">DNA- and RNA-binding protein involved in several cellular processes such as nuclear chromatin organization, telomere-length regulation, transcription, mRNA alternative splicing and stability, Xist-mediated transcriptional silencing and mitotic cell progression (PubMed:10490622, PubMed:18082603, PubMed:19029303, PubMed:22325991, PubMed:25986610, PubMed:28622508). Plays a role in the regulation of interphase large-scale gene-rich chromatin organization through chromatin-associated RNAs (caRNAs) in a transcription-dependent manner, and thereby maintains genomic stability (PubMed:1324173, PubMed:28622508, PubMed:8174554). Required for the localization of the long non-coding Xist RNA on the inactive chromosome X (Xi) and the subsequent initiation and maintenance of X-linked transcriptional gene silencing during X-inactivation (By similarity). Plays a role as a RNA polymerase II (Pol II) holoenzyme transcription regulator (PubMed:10490622, PubMed:15711563, PubMed:19617346, PubMed:23811339, PubMed:8174554, PubMed:9353307). Promotes transcription initiation by direct association with the core-TFIIH basal transcription factor complex for the assembly of a functional pre-initiation complex with Pol II in a actin-dependent manner (PubMed:10490622, PubMed:15711563). Blocks Pol II transcription elongation activity by inhibiting the C-terminal domain (CTD) phosphorylation of Pol II and dissociates from Pol II pre-initiation complex prior to productive transcription elongation (PubMed:10490622). Positively regulates CBX5-induced transcriptional gene silencing and retention of CBX5 in the nucleus (PubMed:19617346). Negatively regulates glucocorticoid-mediated transcriptional activation (PubMed:9353307). Key regulator of transcription initiation and elongation in embryonic stem cells upon leukemia inhibitory factor (LIF) signaling (By similarity). Involved in the long non-coding RNA H19-mediated Pol II transcriptional repression (PubMed:23811339). Participates in the circadian regulation of the core clock component BMAL1 transcription (By similarity). Plays a role in the regulation of telomere length (PubMed:18082603). Plays a role as a global pre-mRNA alternative splicing modulator by regulating U2 small nuclear ribonucleoprotein (snRNP) biogenesis (PubMed:22325991). Plays a role in mRNA stability (PubMed:17174306, PubMed:17289661, PubMed:19029303). Component of the CRD-mediated complex that promotes MYC mRNA stabilization (PubMed:19029303). Enhances the expression of specific genes, such as tumor necrosis factor TNFA, by regulating mRNA stability, possibly through binding to the 3'-untranslated region (UTR) (PubMed:17174306). Plays a role in mitotic cell cycle regulation (PubMed:21242313, PubMed:25986610). Involved in the formation of stable mitotic spindle microtubules (MTs) attachment to kinetochore, spindle organization and chromosome congression (PubMed:21242313). Phosphorylation at Ser-59 by PLK1 is required for chromosome alignement and segregation and progression through mitosis (PubMed:25986610). Also contributes to the targeting of AURKA to mitotic spindle MTs (PubMed:21242313). Binds to double- and single-stranded DNA and RNA, poly(A), poly(C) and poly(G) oligoribonucleotides (PubMed:1628625, PubMed:8068679, PubMed:8174554, PubMed:9204873, PubMed:9405365). Binds to chromatin-associated RNAs (caRNAs) (PubMed:28622508). Associates with chromatin to scaffold/matrix attachment region (S/MAR) elements in a chromatin-associated RNAs (caRNAs)-dependent manner (PubMed:10671544, PubMed:11003645, PubMed:11909954, PubMed:1324173, PubMed:28622508, PubMed:7509195, PubMed:9204873, PubMed:9405365). Binds to the Xist RNA (PubMed:26244333). Binds the long non-coding H19 RNA (PubMed:23811339). Binds to SMN1/2 pre-mRNAs at G/U-rich regions (PubMed:22325991). Binds to small nuclear RNAs (snRNAs) (PubMed:22325991). Binds to the 3'-UTR of TNFA mRNA (PubMed:17174306). Binds (via RNA-binding RGG-box region) to the long non-coding Xist RNA; this binding is direct and bridges the Xist RNA and the inactive chromosome X (Xi) (By similarity). Also negatively regulates embryonic stem cell differentiation upon LIF signaling (By similarity). Required for embryonic development (By similarity). Binds to brown fat long non-coding RNA 1 (Blnc1); facilitates the recruitment of Blnc1 by ZBTB7B required to drive brown and beige fat development and thermogenesis (By similarity).</text>
</comment>
<comment type="function">
    <text evidence="18">(Microbial infection) Negatively regulates immunodeficiency virus type 1 (HIV-1) replication by preventing the accumulation of viral mRNA transcripts in the cytoplasm.</text>
</comment>
<comment type="subunit">
    <text evidence="1 2 7 10 11 16 21 22 23 24 26 27 29 31 33 34 35 36 39 41 44 45 46 47 48">Oligomer (via ATPase domain and RNA-binding RGG-box region); oligomerization occurs upon ATP-binding in a chromatin-associated RNAs (caRNAs)- and transcription-dependent manner and is required for chromatin decompaction (PubMed:28622508). ATP hydrolysis is required to cycle from an oligomeric to monomeric state to compact chromatin (PubMed:28622508). Component of the coding region determinant (CRD)-mediated complex, composed of DHX9, HNRNPU, IGF2BP1, SYNCRIP and YBX1 (PubMed:19029303). Identified in the spliceosome C complex (PubMed:11991638). Identified in a IGF2BP1-dependent mRNP granule complex containing untranslated mRNAs (PubMed:17289661, PubMed:19029303). Associates with heterogeneous nuclear ribonucleoprotein (hnRNP) particles (PubMed:11909954, PubMed:8174554, PubMed:9204873, PubMed:9405365). Associates (via middle region) with the C-terminal domain (CTD) RNA polymerase II (Pol II) holoenzyme; this association occurs in a RNA-independent manner (PubMed:10490622). Associates (via middle region) with the core-TFIIH basal transcription factor complex; this association inhibits the CTD phosphorylation of RNA polymerase II holoenzyme by down-regulating TFIIH kinase activity (PubMed:10490622). Associates with the telomerase holoenzyme complex (PubMed:18082603). Associates with spindle microtubules (MTs) in a TPX2-dependent manner (PubMed:21242313). Interacts (via C-terminus) with actin; this interaction is direct and mediates association with the phosphorylated CTD of RNA polymerase II and is disrupted in presence of the long non-coding H19 RNA (PubMed:15711563, PubMed:23811339). Interacts with AURKA (PubMed:21242313, PubMed:25986610). Interacts (via C-terminus) with CBX5; this interaction is, at least in part, RNA-dependent (PubMed:19617346). Interacts with CR2 (PubMed:7753047). Interacts with CRY1 (By similarity). Interacts (via C-terminus) with EP300; this interaction enhances DNA-binding to nuclear scaffold/matrix attachment region (S/MAR) elements (PubMed:11909954). Interacts with ERBB4 (PubMed:20858735). Interacts with GEMIN5 (PubMed:25911097). Interacts with IGF2BP1 (PubMed:17289661, PubMed:23640942). Interacts with IGF2BP2 and IGF2BP3 (PubMed:23640942). Interacts with NCL; this interaction occurs during mitosis (PubMed:21242313). Interacts (via C-terminus) with NR3C1 (via C-terminus) (PubMed:9353307). Interacts with PLK1; this interaction induces phosphorylation of HNRNPU at Ser-59 in mitosis (PubMed:25986610). Interacts with POU3F4 (PubMed:9105675). Interacts with SMARCA4; this interaction occurs in embryonic stem cells and stimulates global Pol II-mediated transcription. Interacts (via C-terminus) with TOP2A; this interaction protects the topoisomerase TOP2A from degradation and positively regulates the relaxation of supercoiled DNA by TOP2A in a RNA-dependent manner (By similarity). Interacts with TPX2; this interaction recruits HNRNPU to spindle microtubules (MTs) (PubMed:21242313, PubMed:25986610). Interacts with UBQLN2 (PubMed:25616961). Interacts (via RNA-binding RGG-box region) with ZBTB7B; the interaction facilitates the recruitment of long non-coding RNA Blnc1 by ZBTB7B (By similarity). Interacts with ERCC6 (PubMed:26030138).</text>
</comment>
<comment type="subunit">
    <text evidence="25">(Microbial infection) Interacts with HIV-1 protein Rev.</text>
</comment>
<comment type="interaction">
    <interactant intactId="EBI-351126">
        <id>Q00839</id>
    </interactant>
    <interactant intactId="EBI-1052326">
        <id>Q8TDN6</id>
        <label>BRIX1</label>
    </interactant>
    <organismsDiffer>false</organismsDiffer>
    <experiments>2</experiments>
</comment>
<comment type="interaction">
    <interactant intactId="EBI-351126">
        <id>Q00839</id>
    </interactant>
    <interactant intactId="EBI-375053">
        <id>P42771</id>
        <label>CDKN2A</label>
    </interactant>
    <organismsDiffer>false</organismsDiffer>
    <experiments>2</experiments>
</comment>
<comment type="interaction">
    <interactant intactId="EBI-351126">
        <id>Q00839</id>
    </interactant>
    <interactant intactId="EBI-389432">
        <id>P09429</id>
        <label>HMGB1</label>
    </interactant>
    <organismsDiffer>false</organismsDiffer>
    <experiments>3</experiments>
</comment>
<comment type="interaction">
    <interactant intactId="EBI-351126">
        <id>Q00839</id>
    </interactant>
    <interactant intactId="EBI-299674">
        <id>Q14103</id>
        <label>HNRNPD</label>
    </interactant>
    <organismsDiffer>false</organismsDiffer>
    <experiments>5</experiments>
</comment>
<comment type="interaction">
    <interactant intactId="EBI-351126">
        <id>Q00839</id>
    </interactant>
    <interactant intactId="EBI-304185">
        <id>P61978</id>
        <label>HNRNPK</label>
    </interactant>
    <organismsDiffer>false</organismsDiffer>
    <experiments>2</experiments>
</comment>
<comment type="interaction">
    <interactant intactId="EBI-351126">
        <id>Q00839</id>
    </interactant>
    <interactant intactId="EBI-607085">
        <id>P09012</id>
        <label>SNRPA</label>
    </interactant>
    <organismsDiffer>false</organismsDiffer>
    <experiments>2</experiments>
</comment>
<comment type="interaction">
    <interactant intactId="EBI-351126">
        <id>Q00839</id>
    </interactant>
    <interactant intactId="EBI-947187">
        <id>Q9UHD9</id>
        <label>UBQLN2</label>
    </interactant>
    <organismsDiffer>false</organismsDiffer>
    <experiments>3</experiments>
</comment>
<comment type="interaction">
    <interactant intactId="EBI-351143">
        <id>Q00839-2</id>
    </interactant>
    <interactant intactId="EBI-1055254">
        <id>Q8WXH2</id>
        <label>JPH3</label>
    </interactant>
    <organismsDiffer>false</organismsDiffer>
    <experiments>3</experiments>
</comment>
<comment type="interaction">
    <interactant intactId="EBI-351143">
        <id>Q00839-2</id>
    </interactant>
    <interactant intactId="EBI-11987469">
        <id>Q6ZRY4</id>
        <label>RBPMS2</label>
    </interactant>
    <organismsDiffer>false</organismsDiffer>
    <experiments>3</experiments>
</comment>
<comment type="interaction">
    <interactant intactId="EBI-351143">
        <id>Q00839-2</id>
    </interactant>
    <interactant intactId="EBI-372899">
        <id>Q13148</id>
        <label>TARDBP</label>
    </interactant>
    <organismsDiffer>false</organismsDiffer>
    <experiments>6</experiments>
</comment>
<comment type="subcellular location">
    <subcellularLocation>
        <location evidence="8 9 12 13 15 24 27 44 47 48">Nucleus</location>
    </subcellularLocation>
    <subcellularLocation>
        <location evidence="12 13 44">Nucleus matrix</location>
    </subcellularLocation>
    <subcellularLocation>
        <location evidence="9 13 15">Chromosome</location>
    </subcellularLocation>
    <subcellularLocation>
        <location evidence="47">Nucleus speckle</location>
    </subcellularLocation>
    <subcellularLocation>
        <location evidence="14 35">Cytoplasm</location>
        <location evidence="14 35">Cytoskeleton</location>
        <location evidence="14 35">Microtubule organizing center</location>
        <location evidence="14 35">Centrosome</location>
    </subcellularLocation>
    <subcellularLocation>
        <location evidence="27">Chromosome</location>
        <location evidence="27">Centromere</location>
        <location evidence="27">Kinetochore</location>
    </subcellularLocation>
    <subcellularLocation>
        <location evidence="27 35">Cytoplasm</location>
        <location evidence="27 35">Cytoskeleton</location>
        <location evidence="27 35">Spindle</location>
    </subcellularLocation>
    <subcellularLocation>
        <location evidence="27">Cytoplasm</location>
        <location evidence="27">Cytoskeleton</location>
        <location evidence="27">Spindle pole</location>
    </subcellularLocation>
    <subcellularLocation>
        <location evidence="35">Midbody</location>
    </subcellularLocation>
    <subcellularLocation>
        <location evidence="23">Cytoplasm</location>
    </subcellularLocation>
    <subcellularLocation>
        <location evidence="42">Cell surface</location>
    </subcellularLocation>
    <subcellularLocation>
        <location evidence="21">Cytoplasmic granule</location>
    </subcellularLocation>
    <text evidence="2 9 13 15 21 24 27 35 47">Localizes at inactive X chromosome (Xi) regions (PubMed:11003645, PubMed:14608463, PubMed:15563465). Localizes in the nucleus during interphase (PubMed:21242313). At metaphase, localizes with mitotic spindle microtubules (MTs) (PubMed:21242313). At anaphase, localizes in the mitotic spindle midzone (PubMed:21242313). Localizes in spindle MTs proximal to spindle poles in a TPX2- and AURKA-dependent manner (PubMed:21242313). The Ser-59 phosphorylated form localizes to centrosomes during prophase and metaphase, to mitotic spindles in anaphase and to the midbody during cytokinesis (PubMed:25986610). Colocalizes with SMARCA4 in the nucleus (By similarity). Colocalizes with CBX5 in the nucleus (PubMed:19617346). Colocalizes with NR3C1 in nuclear speckles (PubMed:9353307). Localized in cytoplasmic ribonucleoprotein (RNP) granules containing untranslated mRNAs (PubMed:17289661).</text>
</comment>
<comment type="alternative products">
    <event type="alternative splicing"/>
    <isoform>
        <id>Q00839-1</id>
        <name>1</name>
        <name>Long</name>
        <sequence type="displayed"/>
    </isoform>
    <isoform>
        <id>Q00839-2</id>
        <name>2</name>
        <name>Short</name>
        <sequence type="described" ref="VSP_005846"/>
    </isoform>
</comment>
<comment type="tissue specificity">
    <text evidence="40">Widely expressed.</text>
</comment>
<comment type="domain">
    <text evidence="2 9 13 39 48">The SAP domain is necessary for specific binding to nuclear scaffold/matrix attachment region (S/MAR) elements in DNA (PubMed:11003645, PubMed:9405365). The RNA-binding RGG-box region is necessary for its association with inactive X chromosome (Xi) regions and to chromatin-associated RNAs (caRNAs) (PubMed:14608463, PubMed:28622508). Both the DNA-binding domain SAP and the RNA-binding RGG-box region are necessary for the localization of Xist RNA on the Xi (By similarity). The ATPase and RNA-binding RGG-box regions are necessary for oligomerization (PubMed:28622508).</text>
</comment>
<comment type="PTM">
    <text evidence="8 48">Cleaved at Asp-100 by CASP3 during T-cell apoptosis, resulting in a loss of DNA- and chromatin-binding activities (PubMed:10671544, PubMed:9405365).</text>
</comment>
<comment type="PTM">
    <text evidence="35 42">Extensively phosphorylated (PubMed:7993898). Phosphorylated on Ser-59 by PLK1 and dephosphorylated by protein phosphatase 2A (PP2A) in mitosis (PubMed:25986610).</text>
</comment>
<comment type="PTM">
    <text evidence="2 51">Arg-739 is dimethylated, probably to asymmetric dimethylarginine (Ref.8). Arg-733 is dimethylated, probably to asymmetric dimethylarginine (By similarity).</text>
</comment>
<comment type="PTM">
    <text evidence="2">Citrullinated by PADI4.</text>
</comment>
<comment type="disease" evidence="30 32">
    <disease id="DI-04962">
        <name>Developmental and epileptic encephalopathy 54</name>
        <acronym>DEE54</acronym>
        <description>A form of epileptic encephalopathy, a heterogeneous group of severe early-onset epilepsies characterized by refractory seizures, neurodevelopmental impairment, and poor prognosis. Development is normal prior to seizure onset, after which cognitive and motor delays become apparent.</description>
        <dbReference type="MIM" id="617391"/>
    </disease>
    <text>The disease is caused by variants affecting the gene represented in this entry.</text>
</comment>
<comment type="sequence caution" evidence="60">
    <conflict type="miscellaneous discrepancy">
        <sequence resource="EMBL-CDS" id="AAC19382"/>
    </conflict>
    <text>Aberrant splicing.</text>
</comment>
<reference key="1">
    <citation type="journal article" date="1992" name="EMBO J.">
        <title>Primary structure and binding activity of the hnRNP U protein: binding RNA through RGG box.</title>
        <authorList>
            <person name="Kiledjian M."/>
            <person name="Dreyfuss G."/>
        </authorList>
    </citation>
    <scope>NUCLEOTIDE SEQUENCE [MRNA] (ISOFORM 2)</scope>
    <scope>SINGLE-STRANDED DNA-BINDING AND RNA-BINDING</scope>
    <scope>RNA-BINDING REGION</scope>
    <scope>VARIANT LEU-712</scope>
</reference>
<reference key="2">
    <citation type="journal article" date="1994" name="Biochim. Biophys. Acta">
        <title>hnRNP-U/SAF-A is encoded by two differentially polyadenylated mRNAs in human cells.</title>
        <authorList>
            <person name="Fackelmayer F.O."/>
            <person name="Richter A."/>
        </authorList>
    </citation>
    <scope>NUCLEOTIDE SEQUENCE [MRNA] (ISOFORM 2)</scope>
    <scope>TISSUE SPECIFICITY</scope>
</reference>
<reference key="3">
    <citation type="submission" date="1998-05" db="EMBL/GenBank/DDBJ databases">
        <title>A variant of human scaffold attachment factor A (SAF-A), also known as heterogeneous nuclear ribonucleoprotein U (hnRNP-U).</title>
        <authorList>
            <person name="Fackelmayer F.O."/>
        </authorList>
    </citation>
    <scope>NUCLEOTIDE SEQUENCE [MRNA] (ISOFORM 1)</scope>
    <scope>VARIANT LEU-712</scope>
</reference>
<reference key="4">
    <citation type="journal article" date="2006" name="Nature">
        <title>The DNA sequence and biological annotation of human chromosome 1.</title>
        <authorList>
            <person name="Gregory S.G."/>
            <person name="Barlow K.F."/>
            <person name="McLay K.E."/>
            <person name="Kaul R."/>
            <person name="Swarbreck D."/>
            <person name="Dunham A."/>
            <person name="Scott C.E."/>
            <person name="Howe K.L."/>
            <person name="Woodfine K."/>
            <person name="Spencer C.C.A."/>
            <person name="Jones M.C."/>
            <person name="Gillson C."/>
            <person name="Searle S."/>
            <person name="Zhou Y."/>
            <person name="Kokocinski F."/>
            <person name="McDonald L."/>
            <person name="Evans R."/>
            <person name="Phillips K."/>
            <person name="Atkinson A."/>
            <person name="Cooper R."/>
            <person name="Jones C."/>
            <person name="Hall R.E."/>
            <person name="Andrews T.D."/>
            <person name="Lloyd C."/>
            <person name="Ainscough R."/>
            <person name="Almeida J.P."/>
            <person name="Ambrose K.D."/>
            <person name="Anderson F."/>
            <person name="Andrew R.W."/>
            <person name="Ashwell R.I.S."/>
            <person name="Aubin K."/>
            <person name="Babbage A.K."/>
            <person name="Bagguley C.L."/>
            <person name="Bailey J."/>
            <person name="Beasley H."/>
            <person name="Bethel G."/>
            <person name="Bird C.P."/>
            <person name="Bray-Allen S."/>
            <person name="Brown J.Y."/>
            <person name="Brown A.J."/>
            <person name="Buckley D."/>
            <person name="Burton J."/>
            <person name="Bye J."/>
            <person name="Carder C."/>
            <person name="Chapman J.C."/>
            <person name="Clark S.Y."/>
            <person name="Clarke G."/>
            <person name="Clee C."/>
            <person name="Cobley V."/>
            <person name="Collier R.E."/>
            <person name="Corby N."/>
            <person name="Coville G.J."/>
            <person name="Davies J."/>
            <person name="Deadman R."/>
            <person name="Dunn M."/>
            <person name="Earthrowl M."/>
            <person name="Ellington A.G."/>
            <person name="Errington H."/>
            <person name="Frankish A."/>
            <person name="Frankland J."/>
            <person name="French L."/>
            <person name="Garner P."/>
            <person name="Garnett J."/>
            <person name="Gay L."/>
            <person name="Ghori M.R.J."/>
            <person name="Gibson R."/>
            <person name="Gilby L.M."/>
            <person name="Gillett W."/>
            <person name="Glithero R.J."/>
            <person name="Grafham D.V."/>
            <person name="Griffiths C."/>
            <person name="Griffiths-Jones S."/>
            <person name="Grocock R."/>
            <person name="Hammond S."/>
            <person name="Harrison E.S.I."/>
            <person name="Hart E."/>
            <person name="Haugen E."/>
            <person name="Heath P.D."/>
            <person name="Holmes S."/>
            <person name="Holt K."/>
            <person name="Howden P.J."/>
            <person name="Hunt A.R."/>
            <person name="Hunt S.E."/>
            <person name="Hunter G."/>
            <person name="Isherwood J."/>
            <person name="James R."/>
            <person name="Johnson C."/>
            <person name="Johnson D."/>
            <person name="Joy A."/>
            <person name="Kay M."/>
            <person name="Kershaw J.K."/>
            <person name="Kibukawa M."/>
            <person name="Kimberley A.M."/>
            <person name="King A."/>
            <person name="Knights A.J."/>
            <person name="Lad H."/>
            <person name="Laird G."/>
            <person name="Lawlor S."/>
            <person name="Leongamornlert D.A."/>
            <person name="Lloyd D.M."/>
            <person name="Loveland J."/>
            <person name="Lovell J."/>
            <person name="Lush M.J."/>
            <person name="Lyne R."/>
            <person name="Martin S."/>
            <person name="Mashreghi-Mohammadi M."/>
            <person name="Matthews L."/>
            <person name="Matthews N.S.W."/>
            <person name="McLaren S."/>
            <person name="Milne S."/>
            <person name="Mistry S."/>
            <person name="Moore M.J.F."/>
            <person name="Nickerson T."/>
            <person name="O'Dell C.N."/>
            <person name="Oliver K."/>
            <person name="Palmeiri A."/>
            <person name="Palmer S.A."/>
            <person name="Parker A."/>
            <person name="Patel D."/>
            <person name="Pearce A.V."/>
            <person name="Peck A.I."/>
            <person name="Pelan S."/>
            <person name="Phelps K."/>
            <person name="Phillimore B.J."/>
            <person name="Plumb R."/>
            <person name="Rajan J."/>
            <person name="Raymond C."/>
            <person name="Rouse G."/>
            <person name="Saenphimmachak C."/>
            <person name="Sehra H.K."/>
            <person name="Sheridan E."/>
            <person name="Shownkeen R."/>
            <person name="Sims S."/>
            <person name="Skuce C.D."/>
            <person name="Smith M."/>
            <person name="Steward C."/>
            <person name="Subramanian S."/>
            <person name="Sycamore N."/>
            <person name="Tracey A."/>
            <person name="Tromans A."/>
            <person name="Van Helmond Z."/>
            <person name="Wall M."/>
            <person name="Wallis J.M."/>
            <person name="White S."/>
            <person name="Whitehead S.L."/>
            <person name="Wilkinson J.E."/>
            <person name="Willey D.L."/>
            <person name="Williams H."/>
            <person name="Wilming L."/>
            <person name="Wray P.W."/>
            <person name="Wu Z."/>
            <person name="Coulson A."/>
            <person name="Vaudin M."/>
            <person name="Sulston J.E."/>
            <person name="Durbin R.M."/>
            <person name="Hubbard T."/>
            <person name="Wooster R."/>
            <person name="Dunham I."/>
            <person name="Carter N.P."/>
            <person name="McVean G."/>
            <person name="Ross M.T."/>
            <person name="Harrow J."/>
            <person name="Olson M.V."/>
            <person name="Beck S."/>
            <person name="Rogers J."/>
            <person name="Bentley D.R."/>
        </authorList>
    </citation>
    <scope>NUCLEOTIDE SEQUENCE [LARGE SCALE GENOMIC DNA]</scope>
</reference>
<reference key="5">
    <citation type="journal article" date="2004" name="Genome Res.">
        <title>The status, quality, and expansion of the NIH full-length cDNA project: the Mammalian Gene Collection (MGC).</title>
        <authorList>
            <consortium name="The MGC Project Team"/>
        </authorList>
    </citation>
    <scope>NUCLEOTIDE SEQUENCE [LARGE SCALE MRNA] (ISOFORM 2)</scope>
    <source>
        <tissue>Eye</tissue>
        <tissue>Lymph</tissue>
        <tissue>Placenta</tissue>
        <tissue>Skin</tissue>
    </source>
</reference>
<reference key="6">
    <citation type="journal article" date="1994" name="Biochemistry">
        <title>Major cell surface-located protein substrates of an ecto-protein kinase are homologs of known nuclear proteins.</title>
        <authorList>
            <person name="Jordan P."/>
            <person name="Heid H."/>
            <person name="Kinzel V."/>
            <person name="Kubler D."/>
        </authorList>
    </citation>
    <scope>PROTEIN SEQUENCE OF 2-7; 256-265 AND 463-476</scope>
    <scope>PHOSPHORYLATION</scope>
    <scope>SUBCELLULAR LOCATION</scope>
    <scope>IDENTIFICATION BY MASS SPECTROMETRY</scope>
</reference>
<reference key="7">
    <citation type="submission" date="2006-05" db="UniProtKB">
        <authorList>
            <person name="Bienvenut W.V."/>
            <person name="Kanor S."/>
            <person name="Tissot J.-D."/>
            <person name="Quadroni M."/>
        </authorList>
    </citation>
    <scope>PROTEIN SEQUENCE OF 2-9; 186-194; 319-330; 399-409; 423-432; 452-461; 464-475 AND 524-535</scope>
    <scope>CLEAVAGE OF INITIATOR METHIONINE</scope>
    <scope>ACETYLATION AT SER-2</scope>
    <scope>IDENTIFICATION BY MASS SPECTROMETRY</scope>
    <source>
        <tissue>T-cell</tissue>
    </source>
</reference>
<reference key="8">
    <citation type="submission" date="2008-12" db="UniProtKB">
        <authorList>
            <person name="Bienvenut W.V."/>
            <person name="Lilla S."/>
            <person name="von Kriegsheim A."/>
            <person name="Lempens A."/>
            <person name="Kolch W."/>
        </authorList>
    </citation>
    <scope>PROTEIN SEQUENCE OF 2-9; 13-21; 38-69; 187-204; 256-268; 306-324; 353-360; 424-433; 463-484; 495-510; 525-543; 552-558; 566-572; 576-590; 592-601; 627-635; 665-674 AND 734-755</scope>
    <scope>CLEAVAGE OF INITIATOR METHIONINE</scope>
    <scope>ACETYLATION AT SER-2</scope>
    <scope>METHYLATION AT ARG-739</scope>
    <scope>IDENTIFICATION BY MASS SPECTROMETRY</scope>
    <source>
        <tissue>Ovarian carcinoma</tissue>
    </source>
</reference>
<reference key="9">
    <citation type="journal article" date="1992" name="EMBO J.">
        <title>Characterization of SAF-A, a novel nuclear DNA binding protein from HeLa cells with high affinity for nuclear matrix/scaffold attachment DNA elements.</title>
        <authorList>
            <person name="Romig H."/>
            <person name="Fackelmayer F.O."/>
            <person name="Renz A."/>
            <person name="Ramsperger U."/>
            <person name="Richter A."/>
        </authorList>
    </citation>
    <scope>DNA-BINDING</scope>
    <scope>SUBCELLULAR LOCATION</scope>
</reference>
<reference key="10">
    <citation type="journal article" date="1994" name="Biochemistry">
        <title>Purification of two isoforms of hnRNP-U and characterization of their nucleic acid binding activity.</title>
        <authorList>
            <person name="Fackelmayer F.O."/>
            <person name="Richter A."/>
        </authorList>
    </citation>
    <scope>DNA-BINDING AND RNA-BINDING</scope>
    <scope>IDENTIFICATION BY MASS SPECTROMETRY</scope>
</reference>
<reference key="11">
    <citation type="journal article" date="1994" name="Eur. J. Biochem.">
        <title>Nucleic-acid-binding properties of hnRNP-U/SAF-A, a nuclear-matrix protein which binds DNA and RNA in vivo and in vitro.</title>
        <authorList>
            <person name="Fackelmayer F.O."/>
            <person name="Dahm K."/>
            <person name="Renz A."/>
            <person name="Ramsperger U."/>
            <person name="Richter A."/>
        </authorList>
    </citation>
    <scope>FUNCTION IN CHROMATIN STRUCTURE</scope>
    <scope>DNA-BINDING AND RNA-BINDING</scope>
    <scope>SUBCELLULAR LOCATION</scope>
    <scope>ASSOCIATION WITH HNRNP PARTICLES</scope>
</reference>
<reference key="12">
    <citation type="journal article" date="1995" name="Mol. Immunol.">
        <title>Binding sites of the Epstein-Barr virus and C3d receptor (CR2, CD21) for its three intracellular ligands, the p53 anti-oncoprotein, the p68 calcium binding protein and the nuclear p120 ribonucleoprotein.</title>
        <authorList>
            <person name="Barel M."/>
            <person name="Balbo M."/>
            <person name="Gauffre A."/>
            <person name="Frade R."/>
        </authorList>
    </citation>
    <scope>INTERACTION WITH CR2</scope>
</reference>
<reference key="13">
    <citation type="journal article" date="1997" name="Biochemistry">
        <title>The scaffold/matrix attachment region binding protein hnRNP-U (SAF-A) is directly bound to chromosomal DNA in vivo: a chemical cross-linking study.</title>
        <authorList>
            <person name="Goehring F."/>
            <person name="Fackelmayer F.O."/>
        </authorList>
    </citation>
    <scope>DNA-BINDING</scope>
    <scope>CHROMATIN-BINDING</scope>
    <scope>ASSOCIATION WITH HNRNP PARTICLES</scope>
</reference>
<reference key="14">
    <citation type="journal article" date="1997" name="Brain Res. Mol. Brain Res.">
        <title>The class III POU factor Brn-4 interacts with other class III POU factors and the heterogeneous nuclear ribonucleoprotein U.</title>
        <authorList>
            <person name="Malik K.F."/>
            <person name="Jaffe H."/>
            <person name="Brady J."/>
            <person name="Young W.S. III"/>
        </authorList>
    </citation>
    <scope>INTERACTION WITH POU3F4</scope>
</reference>
<reference key="15">
    <citation type="journal article" date="1997" name="EMBO J.">
        <title>The novel SAR-binding domain of scaffold attachment factor A (SAF-A) is a target in apoptotic nuclear breakdown.</title>
        <authorList>
            <person name="Goehring F."/>
            <person name="Schwab B.L."/>
            <person name="Nicotera P."/>
            <person name="Leist M."/>
            <person name="Fackelmayer F.O."/>
        </authorList>
    </citation>
    <scope>CLEAVAGE BY CASPASES</scope>
    <scope>DNA-BINDING</scope>
    <scope>CHROMATIN-BINDING</scope>
    <scope>SUBCELLULAR LOCATION</scope>
    <scope>ASSOCIATION WITH HNRNP PARTICLES</scope>
    <scope>SAP DOMAIN</scope>
</reference>
<reference key="16">
    <citation type="journal article" date="1997" name="J. Biol. Chem.">
        <title>The glucocorticoid receptor is associated with the RNA-binding nuclear matrix protein hnRNP U.</title>
        <authorList>
            <person name="Eggert M."/>
            <person name="Michel J."/>
            <person name="Schneider S."/>
            <person name="Bornfleth H."/>
            <person name="Baniahmad A."/>
            <person name="Fackelmayer F.O."/>
            <person name="Schmidt S."/>
            <person name="Renkawitz R."/>
        </authorList>
    </citation>
    <scope>FUNCTION IN TRANSCRIPTIONAL REGULATION</scope>
    <scope>INTERACTION WITH NR3C1</scope>
    <scope>SUBCELLULAR LOCATION</scope>
    <scope>IDENTIFICATION BY MASS SPECTROMETRY</scope>
</reference>
<reference key="17">
    <citation type="journal article" date="1999" name="Mol. Cell. Biol.">
        <title>hnRNP U inhibits carboxy-terminal domain phosphorylation by TFIIH and represses RNA polymerase II elongation.</title>
        <authorList>
            <person name="Kim M.K."/>
            <person name="Nikodem V.M."/>
        </authorList>
    </citation>
    <scope>FUNCTION IN MRNA TRANSCRIPTION ELONGATION INHIBITION</scope>
    <scope>ASSOCIATION WITH RNA POLYMERASE II HOLOENZYME</scope>
    <scope>ASSOCIATION WITH TFIIH BASAL TRANSCRIPTION FACTOR</scope>
</reference>
<reference key="18">
    <citation type="journal article" date="2000" name="J. Biol. Chem.">
        <title>Apoptotic cleavage of scaffold attachment factor A (SAF-A) by caspase-3 occurs at a noncanonical cleavage site.</title>
        <authorList>
            <person name="Kipp M."/>
            <person name="Schwab B.L."/>
            <person name="Przybylski M."/>
            <person name="Nicotera P."/>
            <person name="Fackelmayer F.O."/>
        </authorList>
    </citation>
    <scope>CLEAVAGE SITE BY CASP3</scope>
    <scope>DNA-BINDING</scope>
    <scope>SUBCELLULAR LOCATION</scope>
    <scope>MUTAGENESIS OF ASP-100</scope>
</reference>
<reference key="19">
    <citation type="journal article" date="2000" name="Mol. Cell. Biol.">
        <title>SAF-Box, a conserved protein domain that specifically recognizes scaffold attachment region DNA.</title>
        <authorList>
            <person name="Kipp M."/>
            <person name="Goehring F."/>
            <person name="Ostendorp T."/>
            <person name="van Drunen C.M."/>
            <person name="van Driel R."/>
            <person name="Przybylski M."/>
            <person name="Fackelmayer F.O."/>
        </authorList>
    </citation>
    <scope>DNA-BINDING</scope>
    <scope>CHROMATIN-BINDING</scope>
    <scope>SUBCELLULAR LOCATION</scope>
    <scope>SAP DOMAIN</scope>
</reference>
<reference key="20">
    <citation type="journal article" date="2002" name="Mol. Cell. Biol.">
        <title>Scaffold/matrix attachment region elements interact with a p300-scaffold attachment factor A complex and are bound by acetylated nucleosomes.</title>
        <authorList>
            <person name="Martens J.H."/>
            <person name="Verlaan M."/>
            <person name="Kalkhoven E."/>
            <person name="Dorsman J.C."/>
            <person name="Zantema A."/>
        </authorList>
    </citation>
    <scope>INTERACTION WITH EP300</scope>
    <scope>ASSOCIATION WITH RNP PARTICLES</scope>
    <scope>CHROMATIN-BINDING</scope>
</reference>
<reference key="21">
    <citation type="journal article" date="2002" name="RNA">
        <title>Purification and characterization of native spliceosomes suitable for three-dimensional structural analysis.</title>
        <authorList>
            <person name="Jurica M.S."/>
            <person name="Licklider L.J."/>
            <person name="Gygi S.P."/>
            <person name="Grigorieff N."/>
            <person name="Moore M.J."/>
        </authorList>
    </citation>
    <scope>IDENTIFICATION BY MASS SPECTROMETRY</scope>
    <scope>IDENTIFICATION IN THE SPLICEOSOMAL C COMPLEX</scope>
</reference>
<reference key="22">
    <citation type="journal article" date="2003" name="Chromosoma">
        <title>Scaffold attachment factor A (SAF-A) is concentrated in inactive X chromosome territories through its RGG domain.</title>
        <authorList>
            <person name="Helbig R."/>
            <person name="Fackelmayer F.O."/>
        </authorList>
    </citation>
    <scope>SUBCELLULAR LOCATION</scope>
    <scope>RNA-BINDING RGG-BOX REGION</scope>
</reference>
<reference key="23">
    <citation type="journal article" date="2003" name="Nature">
        <title>Proteomic characterization of the human centrosome by protein correlation profiling.</title>
        <authorList>
            <person name="Andersen J.S."/>
            <person name="Wilkinson C.J."/>
            <person name="Mayor T."/>
            <person name="Mortensen P."/>
            <person name="Nigg E.A."/>
            <person name="Mann M."/>
        </authorList>
    </citation>
    <scope>IDENTIFICATION BY MASS SPECTROMETRY</scope>
    <scope>SUBCELLULAR LOCATION [LARGE SCALE ANALYSIS]</scope>
    <source>
        <tissue>Lymphoblast</tissue>
    </source>
</reference>
<reference key="24">
    <citation type="journal article" date="2005" name="J. Biol. Chem.">
        <title>A stable proteinaceous structure in the territory of inactive X chromosomes.</title>
        <authorList>
            <person name="Fackelmayer F.O."/>
        </authorList>
    </citation>
    <scope>SUBCELLULAR LOCATION</scope>
</reference>
<reference key="25">
    <citation type="journal article" date="2005" name="Nat. Biotechnol.">
        <title>Immunoaffinity profiling of tyrosine phosphorylation in cancer cells.</title>
        <authorList>
            <person name="Rush J."/>
            <person name="Moritz A."/>
            <person name="Lee K.A."/>
            <person name="Guo A."/>
            <person name="Goss V.L."/>
            <person name="Spek E.J."/>
            <person name="Zhang H."/>
            <person name="Zha X.-M."/>
            <person name="Polakiewicz R.D."/>
            <person name="Comb M.J."/>
        </authorList>
    </citation>
    <scope>IDENTIFICATION BY MASS SPECTROMETRY [LARGE SCALE ANALYSIS]</scope>
</reference>
<reference key="26">
    <citation type="journal article" date="2005" name="Nat. Struct. Mol. Biol.">
        <title>Actin and hnRNP U cooperate for productive transcription by RNA polymerase II.</title>
        <authorList>
            <person name="Kukalev A."/>
            <person name="Nord Y."/>
            <person name="Palmberg C."/>
            <person name="Bergman T."/>
            <person name="Percipalle P."/>
        </authorList>
    </citation>
    <scope>FUNCTION IN TRANSCRIPTIONAL REGULATION</scope>
    <scope>INTERACTION WITH ACTIN</scope>
    <scope>ACTIN-BINDING REGION</scope>
    <scope>MUTAGENESIS OF 616-ARG--LYS-620</scope>
</reference>
<reference key="27">
    <citation type="journal article" date="2006" name="Cell">
        <title>Global, in vivo, and site-specific phosphorylation dynamics in signaling networks.</title>
        <authorList>
            <person name="Olsen J.V."/>
            <person name="Blagoev B."/>
            <person name="Gnad F."/>
            <person name="Macek B."/>
            <person name="Kumar C."/>
            <person name="Mortensen P."/>
            <person name="Mann M."/>
        </authorList>
    </citation>
    <scope>MUTAGENESIS OF SER-59</scope>
    <scope>PHOSPHORYLATION [LARGE SCALE ANALYSIS] AT SER-59 AND SER-271</scope>
    <scope>IDENTIFICATION BY MASS SPECTROMETRY [LARGE SCALE ANALYSIS]</scope>
    <source>
        <tissue>Cervix carcinoma</tissue>
    </source>
</reference>
<reference key="28">
    <citation type="journal article" date="2006" name="Mol. Cell">
        <title>Inhibition of HIV-1 gene expression by a fragment of hnRNP U.</title>
        <authorList>
            <person name="Valente S.T."/>
            <person name="Goff S.P."/>
        </authorList>
    </citation>
    <scope>FUNCTION (MICROBIAL INFECTION)</scope>
</reference>
<reference key="29">
    <citation type="journal article" date="2007" name="Electrophoresis">
        <title>Toward a global characterization of the phosphoproteome in prostate cancer cells: identification of phosphoproteins in the LNCaP cell line.</title>
        <authorList>
            <person name="Giorgianni F."/>
            <person name="Zhao Y."/>
            <person name="Desiderio D.M."/>
            <person name="Beranova-Giorgianni S."/>
        </authorList>
    </citation>
    <scope>PHOSPHORYLATION [LARGE SCALE ANALYSIS] AT SER-271</scope>
    <scope>IDENTIFICATION BY MASS SPECTROMETRY [LARGE SCALE ANALYSIS]</scope>
    <source>
        <tissue>Prostate cancer</tissue>
    </source>
</reference>
<reference key="30">
    <citation type="journal article" date="2007" name="FEBS Lett.">
        <title>hnRNP-U enhances the expression of specific genes by stabilizing mRNA.</title>
        <authorList>
            <person name="Yugami M."/>
            <person name="Kabe Y."/>
            <person name="Yamaguchi Y."/>
            <person name="Wada T."/>
            <person name="Handa H."/>
        </authorList>
    </citation>
    <scope>FUNCTION IN MRNA STABILIZATION</scope>
    <scope>MESSENGER RNA-BINDING</scope>
</reference>
<reference key="31">
    <citation type="journal article" date="2007" name="Mol. Cell">
        <title>Purification of human telomerase complexes identifies factors involved in telomerase biogenesis and telomere length regulation.</title>
        <authorList>
            <person name="Fu D."/>
            <person name="Collins K."/>
        </authorList>
    </citation>
    <scope>FUNCTION IN TELOMERE REGULATION</scope>
    <scope>ASSOCIATION WITH TELOMERASE HOLOENZYME COMPLEX</scope>
</reference>
<reference key="32">
    <citation type="journal article" date="2007" name="Mol. Cell. Proteomics">
        <title>Molecular composition of IMP1 ribonucleoprotein granules.</title>
        <authorList>
            <person name="Joeson L."/>
            <person name="Vikesaa J."/>
            <person name="Krogh A."/>
            <person name="Nielsen L.K."/>
            <person name="Hansen T."/>
            <person name="Borup R."/>
            <person name="Johnsen A.H."/>
            <person name="Christiansen J."/>
            <person name="Nielsen F.C."/>
        </authorList>
    </citation>
    <scope>IDENTIFICATION IN A MRNP GRANULE COMPLEX</scope>
    <scope>INTERACTION WITH IGF2BP1</scope>
    <scope>SUBCELLULAR LOCATION</scope>
    <scope>IDENTIFICATION BY MASS SPECTROMETRY</scope>
</reference>
<reference key="33">
    <citation type="journal article" date="2008" name="J. Proteome Res.">
        <title>Combining protein-based IMAC, peptide-based IMAC, and MudPIT for efficient phosphoproteomic analysis.</title>
        <authorList>
            <person name="Cantin G.T."/>
            <person name="Yi W."/>
            <person name="Lu B."/>
            <person name="Park S.K."/>
            <person name="Xu T."/>
            <person name="Lee J.-D."/>
            <person name="Yates J.R. III"/>
        </authorList>
    </citation>
    <scope>PHOSPHORYLATION [LARGE SCALE ANALYSIS] AT SER-59 AND SER-66</scope>
    <scope>IDENTIFICATION BY MASS SPECTROMETRY [LARGE SCALE ANALYSIS]</scope>
    <source>
        <tissue>Cervix carcinoma</tissue>
    </source>
</reference>
<reference key="34">
    <citation type="journal article" date="2008" name="Proc. Natl. Acad. Sci. U.S.A.">
        <title>A quantitative atlas of mitotic phosphorylation.</title>
        <authorList>
            <person name="Dephoure N."/>
            <person name="Zhou C."/>
            <person name="Villen J."/>
            <person name="Beausoleil S.A."/>
            <person name="Bakalarski C.E."/>
            <person name="Elledge S.J."/>
            <person name="Gygi S.P."/>
        </authorList>
    </citation>
    <scope>PHOSPHORYLATION [LARGE SCALE ANALYSIS] AT SER-271</scope>
    <scope>IDENTIFICATION BY MASS SPECTROMETRY [LARGE SCALE ANALYSIS]</scope>
    <source>
        <tissue>Cervix carcinoma</tissue>
    </source>
</reference>
<reference key="35">
    <citation type="journal article" date="2009" name="Anal. Chem.">
        <title>Lys-N and trypsin cover complementary parts of the phosphoproteome in a refined SCX-based approach.</title>
        <authorList>
            <person name="Gauci S."/>
            <person name="Helbig A.O."/>
            <person name="Slijper M."/>
            <person name="Krijgsveld J."/>
            <person name="Heck A.J."/>
            <person name="Mohammed S."/>
        </authorList>
    </citation>
    <scope>ACETYLATION [LARGE SCALE ANALYSIS] AT SER-2</scope>
    <scope>CLEAVAGE OF INITIATOR METHIONINE [LARGE SCALE ANALYSIS]</scope>
    <scope>IDENTIFICATION BY MASS SPECTROMETRY [LARGE SCALE ANALYSIS]</scope>
</reference>
<reference key="36">
    <citation type="journal article" date="2009" name="J. Biol. Chem.">
        <title>Physical and functional interaction between heterochromatin protein 1alpha and the RNA-binding protein heterogeneous nuclear ribonucleoprotein U.</title>
        <authorList>
            <person name="Ameyar-Zazoua M."/>
            <person name="Souidi M."/>
            <person name="Fritsch L."/>
            <person name="Robin P."/>
            <person name="Thomas A."/>
            <person name="Hamiche A."/>
            <person name="Percipalle P."/>
            <person name="Ait-Si-Ali S."/>
            <person name="Harel-Bellan A."/>
        </authorList>
    </citation>
    <scope>FUNCTION IN TRANSCRIPTIONAL REGULATION</scope>
    <scope>INTERACTION WITH CBX5</scope>
    <scope>SUBCELLULAR LOCATION</scope>
    <scope>IDENTIFICATION BY MASS SPECTROMETRY</scope>
</reference>
<reference key="37">
    <citation type="journal article" date="2009" name="J. Biol. Chem.">
        <title>Identification of a heterogeneous nuclear ribonucleoprotein-recognition region in the HIV Rev protein.</title>
        <authorList>
            <person name="Hadian K."/>
            <person name="Vincendeau M."/>
            <person name="Maeusbacher N."/>
            <person name="Nagel D."/>
            <person name="Hauck S.M."/>
            <person name="Ueffing M."/>
            <person name="Loyter A."/>
            <person name="Werner T."/>
            <person name="Wolff H."/>
            <person name="Brack-Werner R."/>
        </authorList>
    </citation>
    <scope>INTERACTION WITH HIV-1 VIRUS REV PROTEIN (MICROBIAL INFECTION)</scope>
</reference>
<reference key="38">
    <citation type="journal article" date="2009" name="RNA">
        <title>Control of c-myc mRNA stability by IGF2BP1-associated cytoplasmic RNPs.</title>
        <authorList>
            <person name="Weidensdorfer D."/>
            <person name="Stoehr N."/>
            <person name="Baude A."/>
            <person name="Lederer M."/>
            <person name="Koehn M."/>
            <person name="Schierhorn A."/>
            <person name="Buchmeier S."/>
            <person name="Wahle E."/>
            <person name="Huettelmaiery S."/>
        </authorList>
    </citation>
    <scope>FUNCTION IN MRNA STABILITY</scope>
    <scope>COMPONENT OF THE CRD-MEDIATED MRNA STABILIZATION COMPLEX</scope>
    <scope>IDENTIFICATION IN A MRNP COMPLEX</scope>
    <scope>SUBCELLULAR LOCATION</scope>
    <scope>IDENTIFICATION BY MASS SPECTROMETRY</scope>
</reference>
<reference key="39">
    <citation type="journal article" date="2009" name="Sci. Signal.">
        <title>Quantitative phosphoproteomic analysis of T cell receptor signaling reveals system-wide modulation of protein-protein interactions.</title>
        <authorList>
            <person name="Mayya V."/>
            <person name="Lundgren D.H."/>
            <person name="Hwang S.-I."/>
            <person name="Rezaul K."/>
            <person name="Wu L."/>
            <person name="Eng J.K."/>
            <person name="Rodionov V."/>
            <person name="Han D.K."/>
        </authorList>
    </citation>
    <scope>PHOSPHORYLATION [LARGE SCALE ANALYSIS] AT SER-59; SER-66 AND SER-271</scope>
    <scope>IDENTIFICATION BY MASS SPECTROMETRY [LARGE SCALE ANALYSIS]</scope>
    <source>
        <tissue>Leukemic T-cell</tissue>
    </source>
</reference>
<reference key="40">
    <citation type="journal article" date="2009" name="Science">
        <title>Lysine acetylation targets protein complexes and co-regulates major cellular functions.</title>
        <authorList>
            <person name="Choudhary C."/>
            <person name="Kumar C."/>
            <person name="Gnad F."/>
            <person name="Nielsen M.L."/>
            <person name="Rehman M."/>
            <person name="Walther T.C."/>
            <person name="Olsen J.V."/>
            <person name="Mann M."/>
        </authorList>
    </citation>
    <scope>ACETYLATION [LARGE SCALE ANALYSIS] AT LYS-265; LYS-352; LYS-516; LYS-524; LYS-551; LYS-565; LYS-635 AND LYS-814</scope>
    <scope>ACETYLATION [LARGE SCALE ANALYSIS] AT LYS-215 (ISOFORM 2)</scope>
    <scope>IDENTIFICATION BY MASS SPECTROMETRY [LARGE SCALE ANALYSIS]</scope>
</reference>
<reference key="41">
    <citation type="journal article" date="2010" name="Mol. Cancer Res.">
        <title>Interactions of ErbB4 and Kap1 connect the growth factor and DNA damage response pathways.</title>
        <authorList>
            <person name="Gilmore-Hebert M."/>
            <person name="Ramabhadran R."/>
            <person name="Stern D.F."/>
        </authorList>
    </citation>
    <scope>IDENTIFICATION BY MASS SPECTROMETRY</scope>
    <scope>INTERACTION WITH ERBB4</scope>
</reference>
<reference key="42">
    <citation type="journal article" date="2010" name="Sci. Signal.">
        <title>Quantitative phosphoproteomics reveals widespread full phosphorylation site occupancy during mitosis.</title>
        <authorList>
            <person name="Olsen J.V."/>
            <person name="Vermeulen M."/>
            <person name="Santamaria A."/>
            <person name="Kumar C."/>
            <person name="Miller M.L."/>
            <person name="Jensen L.J."/>
            <person name="Gnad F."/>
            <person name="Cox J."/>
            <person name="Jensen T.S."/>
            <person name="Nigg E.A."/>
            <person name="Brunak S."/>
            <person name="Mann M."/>
        </authorList>
    </citation>
    <scope>ACETYLATION [LARGE SCALE ANALYSIS] AT SER-2</scope>
    <scope>PHOSPHORYLATION [LARGE SCALE ANALYSIS] AT SER-4; SER-59; SER-66 AND SER-271</scope>
    <scope>CLEAVAGE OF INITIATOR METHIONINE [LARGE SCALE ANALYSIS]</scope>
    <scope>IDENTIFICATION BY MASS SPECTROMETRY [LARGE SCALE ANALYSIS]</scope>
    <source>
        <tissue>Cervix carcinoma</tissue>
    </source>
</reference>
<reference key="43">
    <citation type="journal article" date="2011" name="BMC Syst. Biol.">
        <title>Initial characterization of the human central proteome.</title>
        <authorList>
            <person name="Burkard T.R."/>
            <person name="Planyavsky M."/>
            <person name="Kaupe I."/>
            <person name="Breitwieser F.P."/>
            <person name="Buerckstuemmer T."/>
            <person name="Bennett K.L."/>
            <person name="Superti-Furga G."/>
            <person name="Colinge J."/>
        </authorList>
    </citation>
    <scope>IDENTIFICATION BY MASS SPECTROMETRY [LARGE SCALE ANALYSIS]</scope>
</reference>
<reference key="44">
    <citation type="journal article" date="2011" name="J. Cell Sci.">
        <title>The nuclear scaffold protein SAF-A is required for kinetochore-microtubule attachment and contributes to the targeting of Aurora-A to mitotic spindles.</title>
        <authorList>
            <person name="Ma N."/>
            <person name="Matsunaga S."/>
            <person name="Morimoto A."/>
            <person name="Sakashita G."/>
            <person name="Urano T."/>
            <person name="Uchiyama S."/>
            <person name="Fukui K."/>
        </authorList>
    </citation>
    <scope>FUNCTION IN MITOSIS</scope>
    <scope>INTERACTION WITH AURKA; NCL AND TPX2</scope>
    <scope>ASSOCIATION WITH MICROTUBULES</scope>
    <scope>SUBCELLULAR LOCATION</scope>
</reference>
<reference key="45">
    <citation type="journal article" date="2011" name="Sci. Signal.">
        <title>System-wide temporal characterization of the proteome and phosphoproteome of human embryonic stem cell differentiation.</title>
        <authorList>
            <person name="Rigbolt K.T."/>
            <person name="Prokhorova T.A."/>
            <person name="Akimov V."/>
            <person name="Henningsen J."/>
            <person name="Johansen P.T."/>
            <person name="Kratchmarova I."/>
            <person name="Kassem M."/>
            <person name="Mann M."/>
            <person name="Olsen J.V."/>
            <person name="Blagoev B."/>
        </authorList>
    </citation>
    <scope>ACETYLATION [LARGE SCALE ANALYSIS] AT SER-2</scope>
    <scope>PHOSPHORYLATION [LARGE SCALE ANALYSIS] AT SER-4; SER-59 AND SER-66</scope>
    <scope>CLEAVAGE OF INITIATOR METHIONINE [LARGE SCALE ANALYSIS]</scope>
    <scope>IDENTIFICATION BY MASS SPECTROMETRY [LARGE SCALE ANALYSIS]</scope>
</reference>
<reference key="46">
    <citation type="journal article" date="2012" name="Mol. Cell">
        <title>Nuclear matrix factor hnRNP U/SAF-A exerts a global control of alternative splicing by regulating U2 snRNP maturation.</title>
        <authorList>
            <person name="Xiao R."/>
            <person name="Tang P."/>
            <person name="Yang B."/>
            <person name="Huang J."/>
            <person name="Zhou Y."/>
            <person name="Shao C."/>
            <person name="Li H."/>
            <person name="Sun H."/>
            <person name="Zhang Y."/>
            <person name="Fu X.D."/>
        </authorList>
    </citation>
    <scope>FUNCTION IN PRE-MRNA ALTERNATIVE SPLICING</scope>
    <scope>PRE-MRNA-BINDING</scope>
    <scope>SNRNA-BINDING</scope>
</reference>
<reference key="47">
    <citation type="journal article" date="2012" name="Mol. Cell. Proteomics">
        <title>Comparative large-scale characterisation of plant vs. mammal proteins reveals similar and idiosyncratic N-alpha acetylation features.</title>
        <authorList>
            <person name="Bienvenut W.V."/>
            <person name="Sumpton D."/>
            <person name="Martinez A."/>
            <person name="Lilla S."/>
            <person name="Espagne C."/>
            <person name="Meinnel T."/>
            <person name="Giglione C."/>
        </authorList>
    </citation>
    <scope>ACETYLATION [LARGE SCALE ANALYSIS] AT SER-2</scope>
    <scope>CLEAVAGE OF INITIATOR METHIONINE [LARGE SCALE ANALYSIS]</scope>
    <scope>IDENTIFICATION BY MASS SPECTROMETRY [LARGE SCALE ANALYSIS]</scope>
</reference>
<reference key="48">
    <citation type="journal article" date="2012" name="Proc. Natl. Acad. Sci. U.S.A.">
        <title>N-terminal acetylome analyses and functional insights of the N-terminal acetyltransferase NatB.</title>
        <authorList>
            <person name="Van Damme P."/>
            <person name="Lasa M."/>
            <person name="Polevoda B."/>
            <person name="Gazquez C."/>
            <person name="Elosegui-Artola A."/>
            <person name="Kim D.S."/>
            <person name="De Juan-Pardo E."/>
            <person name="Demeyer K."/>
            <person name="Hole K."/>
            <person name="Larrea E."/>
            <person name="Timmerman E."/>
            <person name="Prieto J."/>
            <person name="Arnesen T."/>
            <person name="Sherman F."/>
            <person name="Gevaert K."/>
            <person name="Aldabe R."/>
        </authorList>
    </citation>
    <scope>ACETYLATION [LARGE SCALE ANALYSIS] AT SER-2</scope>
    <scope>CLEAVAGE OF INITIATOR METHIONINE [LARGE SCALE ANALYSIS]</scope>
    <scope>IDENTIFICATION BY MASS SPECTROMETRY [LARGE SCALE ANALYSIS]</scope>
</reference>
<reference key="49">
    <citation type="journal article" date="2013" name="Biochim. Biophys. Acta">
        <title>H19 inhibits RNA polymerase II-mediated transcription by disrupting the hnRNP U-actin complex.</title>
        <authorList>
            <person name="Bi H.S."/>
            <person name="Yang X.Y."/>
            <person name="Yuan J.H."/>
            <person name="Yang F."/>
            <person name="Xu D."/>
            <person name="Guo Y.J."/>
            <person name="Zhang L."/>
            <person name="Zhou C.C."/>
            <person name="Wang F."/>
            <person name="Sun S.H."/>
        </authorList>
    </citation>
    <scope>FUNCTION IN TRANSCRIPTIONAL REGULATION</scope>
    <scope>INTERACTION WITH ACTIN</scope>
    <scope>H19 RNA-BINDING</scope>
    <scope>IDENTIFICATION BY MASS SPECTROMETRY</scope>
</reference>
<reference key="50">
    <citation type="journal article" date="2013" name="Biol. Chem.">
        <title>Subcellular localization and RNP formation of IGF2BPs (IGF2 mRNA-binding proteins) is modulated by distinct RNA-binding domains.</title>
        <authorList>
            <person name="Wachter K."/>
            <person name="Kohn M."/>
            <person name="Stohr N."/>
            <person name="Huttelmaier S."/>
        </authorList>
    </citation>
    <scope>INTERACTION WITH IGF2BP1; IGF2BP2 AND IGF2BP3</scope>
</reference>
<reference key="51">
    <citation type="journal article" date="2013" name="J. Proteome Res.">
        <title>Toward a comprehensive characterization of a human cancer cell phosphoproteome.</title>
        <authorList>
            <person name="Zhou H."/>
            <person name="Di Palma S."/>
            <person name="Preisinger C."/>
            <person name="Peng M."/>
            <person name="Polat A.N."/>
            <person name="Heck A.J."/>
            <person name="Mohammed S."/>
        </authorList>
    </citation>
    <scope>PHOSPHORYLATION [LARGE SCALE ANALYSIS] AT SER-4; SER-59; SER-66; SER-267; SER-271; THR-532 AND THR-582</scope>
    <scope>IDENTIFICATION BY MASS SPECTROMETRY [LARGE SCALE ANALYSIS]</scope>
    <source>
        <tissue>Cervix carcinoma</tissue>
        <tissue>Erythroleukemia</tissue>
    </source>
</reference>
<reference key="52">
    <citation type="journal article" date="2014" name="J. Proteomics">
        <title>An enzyme assisted RP-RPLC approach for in-depth analysis of human liver phosphoproteome.</title>
        <authorList>
            <person name="Bian Y."/>
            <person name="Song C."/>
            <person name="Cheng K."/>
            <person name="Dong M."/>
            <person name="Wang F."/>
            <person name="Huang J."/>
            <person name="Sun D."/>
            <person name="Wang L."/>
            <person name="Ye M."/>
            <person name="Zou H."/>
        </authorList>
    </citation>
    <scope>PHOSPHORYLATION [LARGE SCALE ANALYSIS] AT SER-59; SER-271 AND THR-286</scope>
    <scope>IDENTIFICATION BY MASS SPECTROMETRY [LARGE SCALE ANALYSIS]</scope>
    <source>
        <tissue>Liver</tissue>
    </source>
</reference>
<reference key="53">
    <citation type="journal article" date="2014" name="Mol. Cell. Proteomics">
        <title>Immunoaffinity enrichment and mass spectrometry analysis of protein methylation.</title>
        <authorList>
            <person name="Guo A."/>
            <person name="Gu H."/>
            <person name="Zhou J."/>
            <person name="Mulhern D."/>
            <person name="Wang Y."/>
            <person name="Lee K.A."/>
            <person name="Yang V."/>
            <person name="Aguiar M."/>
            <person name="Kornhauser J."/>
            <person name="Jia X."/>
            <person name="Ren J."/>
            <person name="Beausoleil S.A."/>
            <person name="Silva J.C."/>
            <person name="Vemulapalli V."/>
            <person name="Bedford M.T."/>
            <person name="Comb M.J."/>
        </authorList>
    </citation>
    <scope>METHYLATION [LARGE SCALE ANALYSIS] AT ARG-702; ARG-733; ARG-739; ARG-755 AND ARG-762</scope>
    <scope>IDENTIFICATION BY MASS SPECTROMETRY [LARGE SCALE ANALYSIS]</scope>
    <source>
        <tissue>Colon carcinoma</tissue>
    </source>
</reference>
<reference key="54">
    <citation type="journal article" date="2014" name="Nat. Struct. Mol. Biol.">
        <title>Uncovering global SUMOylation signaling networks in a site-specific manner.</title>
        <authorList>
            <person name="Hendriks I.A."/>
            <person name="D'Souza R.C."/>
            <person name="Yang B."/>
            <person name="Verlaan-de Vries M."/>
            <person name="Mann M."/>
            <person name="Vertegaal A.C."/>
        </authorList>
    </citation>
    <scope>SUMOYLATION [LARGE SCALE ANALYSIS] AT LYS-265; LYS-609 AND LYS-670</scope>
    <scope>IDENTIFICATION BY MASS SPECTROMETRY [LARGE SCALE ANALYSIS]</scope>
</reference>
<reference key="55">
    <citation type="journal article" date="2014" name="Proc. Natl. Acad. Sci. U.S.A.">
        <title>Mapping of SUMO sites and analysis of SUMOylation changes induced by external stimuli.</title>
        <authorList>
            <person name="Impens F."/>
            <person name="Radoshevich L."/>
            <person name="Cossart P."/>
            <person name="Ribet D."/>
        </authorList>
    </citation>
    <scope>SUMOYLATION [LARGE SCALE ANALYSIS] AT LYS-265</scope>
    <scope>IDENTIFICATION BY MASS SPECTROMETRY [LARGE SCALE ANALYSIS]</scope>
</reference>
<reference key="56">
    <citation type="journal article" date="2015" name="J. Biol. Chem.">
        <title>Gemin5 binds to the survival motor neuron mRNA to regulate SMN expression.</title>
        <authorList>
            <person name="Workman E."/>
            <person name="Kalda C."/>
            <person name="Patel A."/>
            <person name="Battle D.J."/>
        </authorList>
    </citation>
    <scope>INTERACTION WITH GEMIN5</scope>
</reference>
<reference key="57">
    <citation type="journal article" date="2015" name="Hum. Mol. Genet.">
        <title>ALS-linked mutations in ubiquilin-2 or hnRNPA1 reduce interaction between ubiquilin-2 and hnRNPA1.</title>
        <authorList>
            <person name="Gilpin K.M."/>
            <person name="Chang L."/>
            <person name="Monteiro M.J."/>
        </authorList>
    </citation>
    <scope>INTERACTION WITH UBQLN2</scope>
</reference>
<reference key="58">
    <citation type="journal article" date="2015" name="Mol. Cell. Biol.">
        <title>Phosphorylation of SAF-A/hnRNP-U serine 59 by polo-like kinase 1 is required for mitosis.</title>
        <authorList>
            <person name="Douglas P."/>
            <person name="Ye R."/>
            <person name="Morrice N."/>
            <person name="Britton S."/>
            <person name="Trinkle-Mulcahy L."/>
            <person name="Lees-Miller S.P."/>
        </authorList>
    </citation>
    <scope>FUNCTION IN MITOSIS</scope>
    <scope>INTERACTION WITH AURKA; PLK1 AND TPX2</scope>
    <scope>PHOSPHORYLATION AT SER-59 BY PLK1</scope>
    <scope>DEPHOSPHORYLATION BY PP2A</scope>
    <scope>SUBCELLULAR LOCATION</scope>
    <scope>MUTAGENESIS OF SER-59</scope>
</reference>
<reference key="59">
    <citation type="journal article" date="2015" name="PLoS Genet.">
        <title>Xist exon 7 contributes to the stable localization of Xist RNA on the inactive X-chromosome.</title>
        <authorList>
            <person name="Yamada N."/>
            <person name="Hasegawa Y."/>
            <person name="Yue M."/>
            <person name="Hamada T."/>
            <person name="Nakagawa S."/>
            <person name="Ogawa Y."/>
        </authorList>
    </citation>
    <scope>XIST RNA-BINDING</scope>
</reference>
<reference key="60">
    <citation type="journal article" date="2015" name="PLoS ONE">
        <title>Identification of Novel Proteins Co-Purifying with Cockayne Syndrome Group B (CSB) Reveals Potential Roles for CSB in RNA Metabolism and Chromatin Dynamics.</title>
        <authorList>
            <person name="Nicolai S."/>
            <person name="Filippi S."/>
            <person name="Caputo M."/>
            <person name="Cipak L."/>
            <person name="Gregan J."/>
            <person name="Ammerer G."/>
            <person name="Frontini M."/>
            <person name="Willems D."/>
            <person name="Prantera G."/>
            <person name="Balajee A.S."/>
            <person name="Proietti-De-Santis L."/>
        </authorList>
    </citation>
    <scope>INTERACTION WITH ERCC6</scope>
</reference>
<reference key="61">
    <citation type="journal article" date="2017" name="Cell">
        <title>SAF-A regulates interphase chromosome structure through oligomerization with chromatin-associated RNAs.</title>
        <authorList>
            <person name="Nozawa R.S."/>
            <person name="Boteva L."/>
            <person name="Soares D.C."/>
            <person name="Naughton C."/>
            <person name="Dun A.R."/>
            <person name="Buckle A."/>
            <person name="Ramsahoye B."/>
            <person name="Bruton P.C."/>
            <person name="Saleeb R.S."/>
            <person name="Arnedo M."/>
            <person name="Hill B."/>
            <person name="Duncan R.R."/>
            <person name="Maciver S.K."/>
            <person name="Gilbert N."/>
        </authorList>
    </citation>
    <scope>FUNCTION IN CHROMATIN STRUCTURE</scope>
    <scope>SUBUNIT</scope>
    <scope>ATPASE DOMAIN</scope>
    <scope>RNA-BINDING RGG-BOX REGION</scope>
</reference>
<reference key="62">
    <citation type="journal article" date="2017" name="Mol. Cell">
        <title>Serine ADP-ribosylation depends on HPF1.</title>
        <authorList>
            <person name="Bonfiglio J.J."/>
            <person name="Fontana P."/>
            <person name="Zhang Q."/>
            <person name="Colby T."/>
            <person name="Gibbs-Seymour I."/>
            <person name="Atanassov I."/>
            <person name="Bartlett E."/>
            <person name="Zaja R."/>
            <person name="Ahel I."/>
            <person name="Matic I."/>
        </authorList>
    </citation>
    <scope>ADP-RIBOSYLATION AT SER-187</scope>
</reference>
<reference key="63">
    <citation type="journal article" date="2017" name="Nat. Struct. Mol. Biol.">
        <title>Site-specific mapping of the human SUMO proteome reveals co-modification with phosphorylation.</title>
        <authorList>
            <person name="Hendriks I.A."/>
            <person name="Lyon D."/>
            <person name="Young C."/>
            <person name="Jensen L.J."/>
            <person name="Vertegaal A.C."/>
            <person name="Nielsen M.L."/>
        </authorList>
    </citation>
    <scope>SUMOYLATION [LARGE SCALE ANALYSIS] AT LYS-265; LYS-495; LYS-516; LYS-524; LYS-536; LYS-565; LYS-574; LYS-609; LYS-626; LYS-635; LYS-664; LYS-670 AND LYS-814</scope>
    <scope>IDENTIFICATION BY MASS SPECTROMETRY [LARGE SCALE ANALYSIS]</scope>
</reference>
<reference key="64">
    <citation type="journal article" date="2013" name="Nat. Genet.">
        <title>Targeted resequencing in epileptic encephalopathies identifies de novo mutations in CHD2 and SYNGAP1.</title>
        <authorList>
            <person name="Carvill G.L."/>
            <person name="Heavin S.B."/>
            <person name="Yendle S.C."/>
            <person name="McMahon J.M."/>
            <person name="O'Roak B.J."/>
            <person name="Cook J."/>
            <person name="Khan A."/>
            <person name="Dorschner M.O."/>
            <person name="Weaver M."/>
            <person name="Calvert S."/>
            <person name="Malone S."/>
            <person name="Wallace G."/>
            <person name="Stanley T."/>
            <person name="Bye A.M."/>
            <person name="Bleasel A."/>
            <person name="Howell K.B."/>
            <person name="Kivity S."/>
            <person name="Mackay M.T."/>
            <person name="Rodriguez-Casero V."/>
            <person name="Webster R."/>
            <person name="Korczyn A."/>
            <person name="Afawi Z."/>
            <person name="Zelnick N."/>
            <person name="Lerman-Sagie T."/>
            <person name="Lev D."/>
            <person name="Moeller R.S."/>
            <person name="Gill D."/>
            <person name="Andrade D.M."/>
            <person name="Freeman J.L."/>
            <person name="Sadleir L.G."/>
            <person name="Shendure J."/>
            <person name="Berkovic S.F."/>
            <person name="Scheffer I.E."/>
            <person name="Mefford H.C."/>
        </authorList>
    </citation>
    <scope>INVOLVEMENT IN DEE54</scope>
    <scope>VARIANT DEE54 805-TRP--TYR-825 DEL</scope>
</reference>
<reference key="65">
    <citation type="journal article" date="2014" name="PLoS Genet.">
        <title>De novo mutations in moderate or severe intellectual disability.</title>
        <authorList>
            <person name="Hamdan F.F."/>
            <person name="Srour M."/>
            <person name="Capo-Chichi J.M."/>
            <person name="Daoud H."/>
            <person name="Nassif C."/>
            <person name="Patry L."/>
            <person name="Massicotte C."/>
            <person name="Ambalavanan A."/>
            <person name="Spiegelman D."/>
            <person name="Diallo O."/>
            <person name="Henrion E."/>
            <person name="Dionne-Laporte A."/>
            <person name="Fougerat A."/>
            <person name="Pshezhetsky A.V."/>
            <person name="Venkateswaran S."/>
            <person name="Rouleau G.A."/>
            <person name="Michaud J.L."/>
        </authorList>
    </citation>
    <scope>VARIANT DEE54 171-GLN--TYR-825 DEL</scope>
</reference>
<name>HNRPU_HUMAN</name>
<protein>
    <recommendedName>
        <fullName evidence="54">Heterogeneous nuclear ribonucleoprotein U</fullName>
        <shortName evidence="54">hnRNP U</shortName>
    </recommendedName>
    <alternativeName>
        <fullName evidence="58">GRIP120</fullName>
    </alternativeName>
    <alternativeName>
        <fullName evidence="56">Nuclear p120 ribonucleoprotein</fullName>
    </alternativeName>
    <alternativeName>
        <fullName evidence="52 59">Scaffold-attachment factor A</fullName>
        <shortName evidence="52 59">SAF-A</shortName>
    </alternativeName>
    <alternativeName>
        <fullName evidence="57">p120</fullName>
    </alternativeName>
    <alternativeName>
        <fullName evidence="57">pp120</fullName>
    </alternativeName>
</protein>
<dbReference type="EMBL" id="X65488">
    <property type="protein sequence ID" value="CAA46472.1"/>
    <property type="molecule type" value="mRNA"/>
</dbReference>
<dbReference type="EMBL" id="AF068846">
    <property type="protein sequence ID" value="AAC19382.1"/>
    <property type="status" value="ALT_SEQ"/>
    <property type="molecule type" value="mRNA"/>
</dbReference>
<dbReference type="EMBL" id="BX323046">
    <property type="status" value="NOT_ANNOTATED_CDS"/>
    <property type="molecule type" value="Genomic_DNA"/>
</dbReference>
<dbReference type="EMBL" id="BC003367">
    <property type="protein sequence ID" value="AAH03367.1"/>
    <property type="molecule type" value="mRNA"/>
</dbReference>
<dbReference type="EMBL" id="BC003621">
    <property type="protein sequence ID" value="AAH03621.1"/>
    <property type="molecule type" value="mRNA"/>
</dbReference>
<dbReference type="EMBL" id="BC007950">
    <property type="protein sequence ID" value="AAH07950.2"/>
    <property type="molecule type" value="mRNA"/>
</dbReference>
<dbReference type="EMBL" id="BC024767">
    <property type="protein sequence ID" value="AAH24767.1"/>
    <property type="molecule type" value="mRNA"/>
</dbReference>
<dbReference type="EMBL" id="BC034925">
    <property type="protein sequence ID" value="AAH34925.1"/>
    <property type="molecule type" value="mRNA"/>
</dbReference>
<dbReference type="CCDS" id="CCDS31081.1">
    <molecule id="Q00839-2"/>
</dbReference>
<dbReference type="CCDS" id="CCDS41479.1">
    <molecule id="Q00839-1"/>
</dbReference>
<dbReference type="PIR" id="S22765">
    <property type="entry name" value="S22765"/>
</dbReference>
<dbReference type="RefSeq" id="NP_004492.2">
    <molecule id="Q00839-2"/>
    <property type="nucleotide sequence ID" value="NM_004501.3"/>
</dbReference>
<dbReference type="RefSeq" id="NP_114032.2">
    <molecule id="Q00839-1"/>
    <property type="nucleotide sequence ID" value="NM_031844.3"/>
</dbReference>
<dbReference type="RefSeq" id="XP_016856604.1">
    <property type="nucleotide sequence ID" value="XM_017001115.1"/>
</dbReference>
<dbReference type="RefSeq" id="XP_016856605.1">
    <property type="nucleotide sequence ID" value="XM_017001116.1"/>
</dbReference>
<dbReference type="RefSeq" id="XP_016856606.1">
    <property type="nucleotide sequence ID" value="XM_017001117.1"/>
</dbReference>
<dbReference type="SMR" id="Q00839"/>
<dbReference type="BioGRID" id="109433">
    <property type="interactions" value="1027"/>
</dbReference>
<dbReference type="ComplexPortal" id="CPX-1080">
    <property type="entry name" value="CRD-mediated mRNA stability complex"/>
</dbReference>
<dbReference type="CORUM" id="Q00839"/>
<dbReference type="DIP" id="DIP-684N"/>
<dbReference type="FunCoup" id="Q00839">
    <property type="interactions" value="3387"/>
</dbReference>
<dbReference type="IntAct" id="Q00839">
    <property type="interactions" value="523"/>
</dbReference>
<dbReference type="MINT" id="Q00839"/>
<dbReference type="STRING" id="9606.ENSP00000491215"/>
<dbReference type="ChEMBL" id="CHEMBL4296007"/>
<dbReference type="GlyCosmos" id="Q00839">
    <property type="glycosylation" value="1 site, 1 glycan"/>
</dbReference>
<dbReference type="GlyGen" id="Q00839">
    <property type="glycosylation" value="9 sites, 2 N-linked glycans (2 sites), 1 O-linked glycan (6 sites)"/>
</dbReference>
<dbReference type="iPTMnet" id="Q00839"/>
<dbReference type="MetOSite" id="Q00839"/>
<dbReference type="PhosphoSitePlus" id="Q00839"/>
<dbReference type="SwissPalm" id="Q00839"/>
<dbReference type="BioMuta" id="HNRNPU"/>
<dbReference type="DMDM" id="254763463"/>
<dbReference type="jPOST" id="Q00839"/>
<dbReference type="MassIVE" id="Q00839"/>
<dbReference type="PaxDb" id="9606-ENSP00000283179"/>
<dbReference type="PeptideAtlas" id="Q00839"/>
<dbReference type="ProteomicsDB" id="57874">
    <molecule id="Q00839-1"/>
</dbReference>
<dbReference type="ProteomicsDB" id="57875">
    <molecule id="Q00839-2"/>
</dbReference>
<dbReference type="Pumba" id="Q00839"/>
<dbReference type="Antibodypedia" id="3158">
    <property type="antibodies" value="279 antibodies from 33 providers"/>
</dbReference>
<dbReference type="DNASU" id="3192"/>
<dbReference type="Ensembl" id="ENST00000444376.7">
    <molecule id="Q00839-2"/>
    <property type="protein sequence ID" value="ENSP00000393151.2"/>
    <property type="gene ID" value="ENSG00000153187.21"/>
</dbReference>
<dbReference type="Ensembl" id="ENST00000640218.2">
    <molecule id="Q00839-1"/>
    <property type="protein sequence ID" value="ENSP00000491215.1"/>
    <property type="gene ID" value="ENSG00000153187.21"/>
</dbReference>
<dbReference type="GeneID" id="3192"/>
<dbReference type="KEGG" id="hsa:3192"/>
<dbReference type="MANE-Select" id="ENST00000640218.2">
    <property type="protein sequence ID" value="ENSP00000491215.1"/>
    <property type="RefSeq nucleotide sequence ID" value="NM_031844.3"/>
    <property type="RefSeq protein sequence ID" value="NP_114032.2"/>
</dbReference>
<dbReference type="UCSC" id="uc001iaz.2">
    <molecule id="Q00839-1"/>
    <property type="organism name" value="human"/>
</dbReference>
<dbReference type="AGR" id="HGNC:5048"/>
<dbReference type="CTD" id="3192"/>
<dbReference type="DisGeNET" id="3192"/>
<dbReference type="GeneCards" id="HNRNPU"/>
<dbReference type="GeneReviews" id="HNRNPU"/>
<dbReference type="HGNC" id="HGNC:5048">
    <property type="gene designation" value="HNRNPU"/>
</dbReference>
<dbReference type="HPA" id="ENSG00000153187">
    <property type="expression patterns" value="Low tissue specificity"/>
</dbReference>
<dbReference type="MalaCards" id="HNRNPU"/>
<dbReference type="MIM" id="602869">
    <property type="type" value="gene"/>
</dbReference>
<dbReference type="MIM" id="617391">
    <property type="type" value="phenotype"/>
</dbReference>
<dbReference type="neXtProt" id="NX_Q00839"/>
<dbReference type="OpenTargets" id="ENSG00000153187"/>
<dbReference type="Orphanet" id="238769">
    <property type="disease" value="1q44 microdeletion syndrome"/>
</dbReference>
<dbReference type="PharmGKB" id="PA162391486"/>
<dbReference type="VEuPathDB" id="HostDB:ENSG00000153187"/>
<dbReference type="eggNOG" id="KOG2242">
    <property type="taxonomic scope" value="Eukaryota"/>
</dbReference>
<dbReference type="GeneTree" id="ENSGT00940000156546"/>
<dbReference type="HOGENOM" id="CLU_012140_1_0_1"/>
<dbReference type="InParanoid" id="Q00839"/>
<dbReference type="OMA" id="CNCEMED"/>
<dbReference type="OrthoDB" id="445357at2759"/>
<dbReference type="PAN-GO" id="Q00839">
    <property type="GO annotations" value="32 GO annotations based on evolutionary models"/>
</dbReference>
<dbReference type="PhylomeDB" id="Q00839"/>
<dbReference type="TreeFam" id="TF317301"/>
<dbReference type="PathwayCommons" id="Q00839"/>
<dbReference type="Reactome" id="R-HSA-72163">
    <property type="pathway name" value="mRNA Splicing - Major Pathway"/>
</dbReference>
<dbReference type="Reactome" id="R-HSA-72203">
    <property type="pathway name" value="Processing of Capped Intron-Containing Pre-mRNA"/>
</dbReference>
<dbReference type="Reactome" id="R-HSA-9844594">
    <property type="pathway name" value="Transcriptional regulation of brown and beige adipocyte differentiation by EBF2"/>
</dbReference>
<dbReference type="SignaLink" id="Q00839"/>
<dbReference type="SIGNOR" id="Q00839"/>
<dbReference type="BioGRID-ORCS" id="3192">
    <property type="hits" value="735 hits in 1176 CRISPR screens"/>
</dbReference>
<dbReference type="CD-CODE" id="232F8A39">
    <property type="entry name" value="P-body"/>
</dbReference>
<dbReference type="CD-CODE" id="804901D1">
    <property type="entry name" value="Nuclear speckle"/>
</dbReference>
<dbReference type="CD-CODE" id="8C2F96ED">
    <property type="entry name" value="Centrosome"/>
</dbReference>
<dbReference type="CD-CODE" id="91857CE7">
    <property type="entry name" value="Nucleolus"/>
</dbReference>
<dbReference type="CD-CODE" id="DEE660B4">
    <property type="entry name" value="Stress granule"/>
</dbReference>
<dbReference type="CD-CODE" id="F85A2E29">
    <property type="entry name" value="IMP1 RNP granule"/>
</dbReference>
<dbReference type="ChiTaRS" id="HNRNPU">
    <property type="organism name" value="human"/>
</dbReference>
<dbReference type="GeneWiki" id="HNRPU"/>
<dbReference type="GenomeRNAi" id="3192"/>
<dbReference type="Pharos" id="Q00839">
    <property type="development level" value="Tbio"/>
</dbReference>
<dbReference type="PRO" id="PR:Q00839"/>
<dbReference type="Proteomes" id="UP000005640">
    <property type="component" value="Chromosome 1"/>
</dbReference>
<dbReference type="RNAct" id="Q00839">
    <property type="molecule type" value="protein"/>
</dbReference>
<dbReference type="Bgee" id="ENSG00000153187">
    <property type="expression patterns" value="Expressed in sperm and 210 other cell types or tissues"/>
</dbReference>
<dbReference type="ExpressionAtlas" id="Q00839">
    <property type="expression patterns" value="baseline and differential"/>
</dbReference>
<dbReference type="GO" id="GO:0071013">
    <property type="term" value="C:catalytic step 2 spliceosome"/>
    <property type="evidence" value="ECO:0000314"/>
    <property type="project" value="UniProtKB"/>
</dbReference>
<dbReference type="GO" id="GO:0009986">
    <property type="term" value="C:cell surface"/>
    <property type="evidence" value="ECO:0000314"/>
    <property type="project" value="UniProtKB"/>
</dbReference>
<dbReference type="GO" id="GO:0005813">
    <property type="term" value="C:centrosome"/>
    <property type="evidence" value="ECO:0000314"/>
    <property type="project" value="UniProtKB"/>
</dbReference>
<dbReference type="GO" id="GO:0070937">
    <property type="term" value="C:CRD-mediated mRNA stability complex"/>
    <property type="evidence" value="ECO:0000314"/>
    <property type="project" value="UniProtKB"/>
</dbReference>
<dbReference type="GO" id="GO:0036464">
    <property type="term" value="C:cytoplasmic ribonucleoprotein granule"/>
    <property type="evidence" value="ECO:0000314"/>
    <property type="project" value="ParkinsonsUK-UCL"/>
</dbReference>
<dbReference type="GO" id="GO:0005829">
    <property type="term" value="C:cytosol"/>
    <property type="evidence" value="ECO:0000314"/>
    <property type="project" value="ComplexPortal"/>
</dbReference>
<dbReference type="GO" id="GO:0030425">
    <property type="term" value="C:dendrite"/>
    <property type="evidence" value="ECO:0007669"/>
    <property type="project" value="GOC"/>
</dbReference>
<dbReference type="GO" id="GO:0098577">
    <property type="term" value="C:inactive sex chromosome"/>
    <property type="evidence" value="ECO:0000314"/>
    <property type="project" value="UniProtKB"/>
</dbReference>
<dbReference type="GO" id="GO:0000776">
    <property type="term" value="C:kinetochore"/>
    <property type="evidence" value="ECO:0000314"/>
    <property type="project" value="UniProtKB"/>
</dbReference>
<dbReference type="GO" id="GO:0016020">
    <property type="term" value="C:membrane"/>
    <property type="evidence" value="ECO:0007005"/>
    <property type="project" value="UniProtKB"/>
</dbReference>
<dbReference type="GO" id="GO:0030496">
    <property type="term" value="C:midbody"/>
    <property type="evidence" value="ECO:0000314"/>
    <property type="project" value="UniProtKB"/>
</dbReference>
<dbReference type="GO" id="GO:0072686">
    <property type="term" value="C:mitotic spindle"/>
    <property type="evidence" value="ECO:0000314"/>
    <property type="project" value="UniProtKB"/>
</dbReference>
<dbReference type="GO" id="GO:1990498">
    <property type="term" value="C:mitotic spindle microtubule"/>
    <property type="evidence" value="ECO:0000314"/>
    <property type="project" value="UniProtKB"/>
</dbReference>
<dbReference type="GO" id="GO:1990023">
    <property type="term" value="C:mitotic spindle midzone"/>
    <property type="evidence" value="ECO:0000314"/>
    <property type="project" value="UniProtKB"/>
</dbReference>
<dbReference type="GO" id="GO:0000228">
    <property type="term" value="C:nuclear chromosome"/>
    <property type="evidence" value="ECO:0000314"/>
    <property type="project" value="UniProtKB"/>
</dbReference>
<dbReference type="GO" id="GO:0016363">
    <property type="term" value="C:nuclear matrix"/>
    <property type="evidence" value="ECO:0000314"/>
    <property type="project" value="UniProtKB"/>
</dbReference>
<dbReference type="GO" id="GO:0016607">
    <property type="term" value="C:nuclear speck"/>
    <property type="evidence" value="ECO:0000314"/>
    <property type="project" value="UniProtKB"/>
</dbReference>
<dbReference type="GO" id="GO:0005654">
    <property type="term" value="C:nucleoplasm"/>
    <property type="evidence" value="ECO:0000314"/>
    <property type="project" value="HPA"/>
</dbReference>
<dbReference type="GO" id="GO:0005634">
    <property type="term" value="C:nucleus"/>
    <property type="evidence" value="ECO:0000314"/>
    <property type="project" value="UniProtKB"/>
</dbReference>
<dbReference type="GO" id="GO:0032991">
    <property type="term" value="C:protein-containing complex"/>
    <property type="evidence" value="ECO:0000314"/>
    <property type="project" value="UniProtKB"/>
</dbReference>
<dbReference type="GO" id="GO:1990904">
    <property type="term" value="C:ribonucleoprotein complex"/>
    <property type="evidence" value="ECO:0000314"/>
    <property type="project" value="UniProtKB"/>
</dbReference>
<dbReference type="GO" id="GO:0000922">
    <property type="term" value="C:spindle pole"/>
    <property type="evidence" value="ECO:0007669"/>
    <property type="project" value="UniProtKB-SubCell"/>
</dbReference>
<dbReference type="GO" id="GO:0005697">
    <property type="term" value="C:telomerase holoenzyme complex"/>
    <property type="evidence" value="ECO:0000314"/>
    <property type="project" value="BHF-UCL"/>
</dbReference>
<dbReference type="GO" id="GO:0003779">
    <property type="term" value="F:actin binding"/>
    <property type="evidence" value="ECO:0000314"/>
    <property type="project" value="UniProtKB"/>
</dbReference>
<dbReference type="GO" id="GO:0005524">
    <property type="term" value="F:ATP binding"/>
    <property type="evidence" value="ECO:0000314"/>
    <property type="project" value="UniProtKB"/>
</dbReference>
<dbReference type="GO" id="GO:0003682">
    <property type="term" value="F:chromatin binding"/>
    <property type="evidence" value="ECO:0000314"/>
    <property type="project" value="UniProtKB"/>
</dbReference>
<dbReference type="GO" id="GO:0031490">
    <property type="term" value="F:chromatin DNA binding"/>
    <property type="evidence" value="ECO:0000314"/>
    <property type="project" value="UniProtKB"/>
</dbReference>
<dbReference type="GO" id="GO:0003677">
    <property type="term" value="F:DNA binding"/>
    <property type="evidence" value="ECO:0000314"/>
    <property type="project" value="UniProtKB"/>
</dbReference>
<dbReference type="GO" id="GO:0003690">
    <property type="term" value="F:double-stranded DNA binding"/>
    <property type="evidence" value="ECO:0000314"/>
    <property type="project" value="UniProtKB"/>
</dbReference>
<dbReference type="GO" id="GO:0003725">
    <property type="term" value="F:double-stranded RNA binding"/>
    <property type="evidence" value="ECO:0000314"/>
    <property type="project" value="UniProtKB"/>
</dbReference>
<dbReference type="GO" id="GO:0042802">
    <property type="term" value="F:identical protein binding"/>
    <property type="evidence" value="ECO:0000314"/>
    <property type="project" value="UniProtKB"/>
</dbReference>
<dbReference type="GO" id="GO:0106222">
    <property type="term" value="F:lncRNA binding"/>
    <property type="evidence" value="ECO:0007669"/>
    <property type="project" value="Ensembl"/>
</dbReference>
<dbReference type="GO" id="GO:0003730">
    <property type="term" value="F:mRNA 3'-UTR binding"/>
    <property type="evidence" value="ECO:0000314"/>
    <property type="project" value="UniProtKB"/>
</dbReference>
<dbReference type="GO" id="GO:0034584">
    <property type="term" value="F:piRNA binding"/>
    <property type="evidence" value="ECO:0000353"/>
    <property type="project" value="FlyBase"/>
</dbReference>
<dbReference type="GO" id="GO:0008143">
    <property type="term" value="F:poly(A) binding"/>
    <property type="evidence" value="ECO:0000314"/>
    <property type="project" value="UniProtKB"/>
</dbReference>
<dbReference type="GO" id="GO:0017130">
    <property type="term" value="F:poly(C) RNA binding"/>
    <property type="evidence" value="ECO:0000314"/>
    <property type="project" value="UniProtKB"/>
</dbReference>
<dbReference type="GO" id="GO:0034046">
    <property type="term" value="F:poly(G) binding"/>
    <property type="evidence" value="ECO:0000314"/>
    <property type="project" value="UniProtKB"/>
</dbReference>
<dbReference type="GO" id="GO:0036002">
    <property type="term" value="F:pre-mRNA binding"/>
    <property type="evidence" value="ECO:0000314"/>
    <property type="project" value="UniProtKB"/>
</dbReference>
<dbReference type="GO" id="GO:1990841">
    <property type="term" value="F:promoter-specific chromatin binding"/>
    <property type="evidence" value="ECO:0000250"/>
    <property type="project" value="UniProtKB"/>
</dbReference>
<dbReference type="GO" id="GO:0044877">
    <property type="term" value="F:protein-containing complex binding"/>
    <property type="evidence" value="ECO:0000314"/>
    <property type="project" value="UniProtKB"/>
</dbReference>
<dbReference type="GO" id="GO:0043021">
    <property type="term" value="F:ribonucleoprotein complex binding"/>
    <property type="evidence" value="ECO:0000314"/>
    <property type="project" value="UniProtKB"/>
</dbReference>
<dbReference type="GO" id="GO:0003723">
    <property type="term" value="F:RNA binding"/>
    <property type="evidence" value="ECO:0000314"/>
    <property type="project" value="UniProtKB"/>
</dbReference>
<dbReference type="GO" id="GO:0099122">
    <property type="term" value="F:RNA polymerase II C-terminal domain binding"/>
    <property type="evidence" value="ECO:0000250"/>
    <property type="project" value="UniProtKB"/>
</dbReference>
<dbReference type="GO" id="GO:0000978">
    <property type="term" value="F:RNA polymerase II cis-regulatory region sequence-specific DNA binding"/>
    <property type="evidence" value="ECO:0000250"/>
    <property type="project" value="UniProtKB"/>
</dbReference>
<dbReference type="GO" id="GO:0000993">
    <property type="term" value="F:RNA polymerase II complex binding"/>
    <property type="evidence" value="ECO:0000314"/>
    <property type="project" value="UniProtKB"/>
</dbReference>
<dbReference type="GO" id="GO:1990837">
    <property type="term" value="F:sequence-specific double-stranded DNA binding"/>
    <property type="evidence" value="ECO:0000314"/>
    <property type="project" value="UniProtKB"/>
</dbReference>
<dbReference type="GO" id="GO:0003697">
    <property type="term" value="F:single-stranded DNA binding"/>
    <property type="evidence" value="ECO:0000314"/>
    <property type="project" value="UniProtKB"/>
</dbReference>
<dbReference type="GO" id="GO:0003727">
    <property type="term" value="F:single-stranded RNA binding"/>
    <property type="evidence" value="ECO:0000314"/>
    <property type="project" value="UniProtKB"/>
</dbReference>
<dbReference type="GO" id="GO:0017069">
    <property type="term" value="F:snRNA binding"/>
    <property type="evidence" value="ECO:0000314"/>
    <property type="project" value="UniProtKB"/>
</dbReference>
<dbReference type="GO" id="GO:0070034">
    <property type="term" value="F:telomerase RNA binding"/>
    <property type="evidence" value="ECO:0000353"/>
    <property type="project" value="BHF-UCL"/>
</dbReference>
<dbReference type="GO" id="GO:0001097">
    <property type="term" value="F:TFIIH-class transcription factor complex binding"/>
    <property type="evidence" value="ECO:0000314"/>
    <property type="project" value="UniProtKB"/>
</dbReference>
<dbReference type="GO" id="GO:0003714">
    <property type="term" value="F:transcription corepressor activity"/>
    <property type="evidence" value="ECO:0000315"/>
    <property type="project" value="UniProtKB"/>
</dbReference>
<dbReference type="GO" id="GO:1990845">
    <property type="term" value="P:adaptive thermogenesis"/>
    <property type="evidence" value="ECO:0000250"/>
    <property type="project" value="UniProtKB"/>
</dbReference>
<dbReference type="GO" id="GO:0000380">
    <property type="term" value="P:alternative mRNA splicing, via spliceosome"/>
    <property type="evidence" value="ECO:0000318"/>
    <property type="project" value="GO_Central"/>
</dbReference>
<dbReference type="GO" id="GO:0055013">
    <property type="term" value="P:cardiac muscle cell development"/>
    <property type="evidence" value="ECO:0007669"/>
    <property type="project" value="Ensembl"/>
</dbReference>
<dbReference type="GO" id="GO:0051301">
    <property type="term" value="P:cell division"/>
    <property type="evidence" value="ECO:0007669"/>
    <property type="project" value="UniProtKB-KW"/>
</dbReference>
<dbReference type="GO" id="GO:0071385">
    <property type="term" value="P:cellular response to glucocorticoid stimulus"/>
    <property type="evidence" value="ECO:0000314"/>
    <property type="project" value="UniProtKB"/>
</dbReference>
<dbReference type="GO" id="GO:1990830">
    <property type="term" value="P:cellular response to leukemia inhibitory factor"/>
    <property type="evidence" value="ECO:0000250"/>
    <property type="project" value="UniProtKB"/>
</dbReference>
<dbReference type="GO" id="GO:0006325">
    <property type="term" value="P:chromatin organization"/>
    <property type="evidence" value="ECO:0000304"/>
    <property type="project" value="ARUK-UCL"/>
</dbReference>
<dbReference type="GO" id="GO:0032922">
    <property type="term" value="P:circadian regulation of gene expression"/>
    <property type="evidence" value="ECO:0000250"/>
    <property type="project" value="UniProtKB"/>
</dbReference>
<dbReference type="GO" id="GO:0070934">
    <property type="term" value="P:CRD-mediated mRNA stabilization"/>
    <property type="evidence" value="ECO:0000314"/>
    <property type="project" value="ComplexPortal"/>
</dbReference>
<dbReference type="GO" id="GO:0098963">
    <property type="term" value="P:dendritic transport of messenger ribonucleoprotein complex"/>
    <property type="evidence" value="ECO:0007669"/>
    <property type="project" value="Ensembl"/>
</dbReference>
<dbReference type="GO" id="GO:0009048">
    <property type="term" value="P:dosage compensation by inactivation of X chromosome"/>
    <property type="evidence" value="ECO:0000250"/>
    <property type="project" value="UniProtKB"/>
</dbReference>
<dbReference type="GO" id="GO:0030218">
    <property type="term" value="P:erythrocyte differentiation"/>
    <property type="evidence" value="ECO:0007669"/>
    <property type="project" value="Ensembl"/>
</dbReference>
<dbReference type="GO" id="GO:0051457">
    <property type="term" value="P:maintenance of protein location in nucleus"/>
    <property type="evidence" value="ECO:0000315"/>
    <property type="project" value="UniProtKB"/>
</dbReference>
<dbReference type="GO" id="GO:0000398">
    <property type="term" value="P:mRNA splicing, via spliceosome"/>
    <property type="evidence" value="ECO:0000305"/>
    <property type="project" value="UniProtKB"/>
</dbReference>
<dbReference type="GO" id="GO:0048255">
    <property type="term" value="P:mRNA stabilization"/>
    <property type="evidence" value="ECO:0000314"/>
    <property type="project" value="UniProtKB"/>
</dbReference>
<dbReference type="GO" id="GO:0033673">
    <property type="term" value="P:negative regulation of kinase activity"/>
    <property type="evidence" value="ECO:0000315"/>
    <property type="project" value="UniProtKB"/>
</dbReference>
<dbReference type="GO" id="GO:1900152">
    <property type="term" value="P:negative regulation of nuclear-transcribed mRNA catabolic process, deadenylation-dependent decay"/>
    <property type="evidence" value="ECO:0000314"/>
    <property type="project" value="ComplexPortal"/>
</dbReference>
<dbReference type="GO" id="GO:2000737">
    <property type="term" value="P:negative regulation of stem cell differentiation"/>
    <property type="evidence" value="ECO:0000315"/>
    <property type="project" value="UniProtKB"/>
</dbReference>
<dbReference type="GO" id="GO:0032211">
    <property type="term" value="P:negative regulation of telomere maintenance via telomerase"/>
    <property type="evidence" value="ECO:0000315"/>
    <property type="project" value="BHF-UCL"/>
</dbReference>
<dbReference type="GO" id="GO:0000122">
    <property type="term" value="P:negative regulation of transcription by RNA polymerase II"/>
    <property type="evidence" value="ECO:0000315"/>
    <property type="project" value="UniProtKB"/>
</dbReference>
<dbReference type="GO" id="GO:0034244">
    <property type="term" value="P:negative regulation of transcription elongation by RNA polymerase II"/>
    <property type="evidence" value="ECO:0000315"/>
    <property type="project" value="UniProtKB"/>
</dbReference>
<dbReference type="GO" id="GO:0001649">
    <property type="term" value="P:osteoblast differentiation"/>
    <property type="evidence" value="ECO:0007005"/>
    <property type="project" value="UniProtKB"/>
</dbReference>
<dbReference type="GO" id="GO:1902425">
    <property type="term" value="P:positive regulation of attachment of mitotic spindle microtubules to kinetochore"/>
    <property type="evidence" value="ECO:0000315"/>
    <property type="project" value="UniProtKB"/>
</dbReference>
<dbReference type="GO" id="GO:0090336">
    <property type="term" value="P:positive regulation of brown fat cell differentiation"/>
    <property type="evidence" value="ECO:0000250"/>
    <property type="project" value="UniProtKB"/>
</dbReference>
<dbReference type="GO" id="GO:2000767">
    <property type="term" value="P:positive regulation of cytoplasmic translation"/>
    <property type="evidence" value="ECO:0000314"/>
    <property type="project" value="ComplexPortal"/>
</dbReference>
<dbReference type="GO" id="GO:2000373">
    <property type="term" value="P:positive regulation of DNA topoisomerase (ATP-hydrolyzing) activity"/>
    <property type="evidence" value="ECO:0000250"/>
    <property type="project" value="UniProtKB"/>
</dbReference>
<dbReference type="GO" id="GO:2000648">
    <property type="term" value="P:positive regulation of stem cell proliferation"/>
    <property type="evidence" value="ECO:0000250"/>
    <property type="project" value="UniProtKB"/>
</dbReference>
<dbReference type="GO" id="GO:0045944">
    <property type="term" value="P:positive regulation of transcription by RNA polymerase II"/>
    <property type="evidence" value="ECO:0000315"/>
    <property type="project" value="UniProtKB"/>
</dbReference>
<dbReference type="GO" id="GO:1902889">
    <property type="term" value="P:protein localization to spindle microtubule"/>
    <property type="evidence" value="ECO:0000315"/>
    <property type="project" value="UniProtKB"/>
</dbReference>
<dbReference type="GO" id="GO:0060816">
    <property type="term" value="P:random inactivation of X chromosome"/>
    <property type="evidence" value="ECO:0000314"/>
    <property type="project" value="FlyBase"/>
</dbReference>
<dbReference type="GO" id="GO:0000381">
    <property type="term" value="P:regulation of alternative mRNA splicing, via spliceosome"/>
    <property type="evidence" value="ECO:0000314"/>
    <property type="project" value="UniProtKB"/>
</dbReference>
<dbReference type="GO" id="GO:1902275">
    <property type="term" value="P:regulation of chromatin organization"/>
    <property type="evidence" value="ECO:0000315"/>
    <property type="project" value="UniProtKB"/>
</dbReference>
<dbReference type="GO" id="GO:0007346">
    <property type="term" value="P:regulation of mitotic cell cycle"/>
    <property type="evidence" value="ECO:0000315"/>
    <property type="project" value="UniProtKB"/>
</dbReference>
<dbReference type="GO" id="GO:1901673">
    <property type="term" value="P:regulation of mitotic spindle assembly"/>
    <property type="evidence" value="ECO:0000315"/>
    <property type="project" value="UniProtKB"/>
</dbReference>
<dbReference type="GO" id="GO:0031048">
    <property type="term" value="P:regulatory ncRNA-mediated heterochromatin formation"/>
    <property type="evidence" value="ECO:0000315"/>
    <property type="project" value="FlyBase"/>
</dbReference>
<dbReference type="GO" id="GO:1990280">
    <property type="term" value="P:RNA localization to chromatin"/>
    <property type="evidence" value="ECO:0000250"/>
    <property type="project" value="UniProtKB"/>
</dbReference>
<dbReference type="GO" id="GO:0006396">
    <property type="term" value="P:RNA processing"/>
    <property type="evidence" value="ECO:0000304"/>
    <property type="project" value="ProtInc"/>
</dbReference>
<dbReference type="CDD" id="cd12884">
    <property type="entry name" value="SPRY_hnRNP"/>
    <property type="match status" value="1"/>
</dbReference>
<dbReference type="FunFam" id="1.10.720.30:FF:000004">
    <property type="entry name" value="heterogeneous nuclear ribonucleoprotein U isoform X1"/>
    <property type="match status" value="1"/>
</dbReference>
<dbReference type="FunFam" id="2.60.120.920:FF:000006">
    <property type="entry name" value="heterogeneous nuclear ribonucleoprotein U isoform X1"/>
    <property type="match status" value="1"/>
</dbReference>
<dbReference type="FunFam" id="3.40.50.300:FF:000376">
    <property type="entry name" value="Putative heterogeneous nuclear ribonucleoprotein U"/>
    <property type="match status" value="1"/>
</dbReference>
<dbReference type="Gene3D" id="2.60.120.920">
    <property type="match status" value="1"/>
</dbReference>
<dbReference type="Gene3D" id="3.40.50.300">
    <property type="entry name" value="P-loop containing nucleotide triphosphate hydrolases"/>
    <property type="match status" value="1"/>
</dbReference>
<dbReference type="Gene3D" id="1.10.720.30">
    <property type="entry name" value="SAP domain"/>
    <property type="match status" value="1"/>
</dbReference>
<dbReference type="InterPro" id="IPR001870">
    <property type="entry name" value="B30.2/SPRY"/>
</dbReference>
<dbReference type="InterPro" id="IPR043136">
    <property type="entry name" value="B30.2/SPRY_sf"/>
</dbReference>
<dbReference type="InterPro" id="IPR013320">
    <property type="entry name" value="ConA-like_dom_sf"/>
</dbReference>
<dbReference type="InterPro" id="IPR027417">
    <property type="entry name" value="P-loop_NTPase"/>
</dbReference>
<dbReference type="InterPro" id="IPR003034">
    <property type="entry name" value="SAP_dom"/>
</dbReference>
<dbReference type="InterPro" id="IPR036361">
    <property type="entry name" value="SAP_dom_sf"/>
</dbReference>
<dbReference type="InterPro" id="IPR003877">
    <property type="entry name" value="SPRY_dom"/>
</dbReference>
<dbReference type="InterPro" id="IPR035778">
    <property type="entry name" value="SPRY_hnRNP_U"/>
</dbReference>
<dbReference type="PANTHER" id="PTHR12381:SF11">
    <property type="entry name" value="HETEROGENEOUS NUCLEAR RIBONUCLEOPROTEIN U"/>
    <property type="match status" value="1"/>
</dbReference>
<dbReference type="PANTHER" id="PTHR12381">
    <property type="entry name" value="HETEROGENEOUS NUCLEAR RIBONUCLEOPROTEIN U FAMILY MEMBER"/>
    <property type="match status" value="1"/>
</dbReference>
<dbReference type="Pfam" id="PF13671">
    <property type="entry name" value="AAA_33"/>
    <property type="match status" value="1"/>
</dbReference>
<dbReference type="Pfam" id="PF02037">
    <property type="entry name" value="SAP"/>
    <property type="match status" value="1"/>
</dbReference>
<dbReference type="Pfam" id="PF00622">
    <property type="entry name" value="SPRY"/>
    <property type="match status" value="1"/>
</dbReference>
<dbReference type="SMART" id="SM00513">
    <property type="entry name" value="SAP"/>
    <property type="match status" value="1"/>
</dbReference>
<dbReference type="SMART" id="SM00449">
    <property type="entry name" value="SPRY"/>
    <property type="match status" value="1"/>
</dbReference>
<dbReference type="SUPFAM" id="SSF49899">
    <property type="entry name" value="Concanavalin A-like lectins/glucanases"/>
    <property type="match status" value="1"/>
</dbReference>
<dbReference type="SUPFAM" id="SSF52540">
    <property type="entry name" value="P-loop containing nucleoside triphosphate hydrolases"/>
    <property type="match status" value="1"/>
</dbReference>
<dbReference type="SUPFAM" id="SSF68906">
    <property type="entry name" value="SAP domain"/>
    <property type="match status" value="1"/>
</dbReference>
<dbReference type="PROSITE" id="PS50188">
    <property type="entry name" value="B302_SPRY"/>
    <property type="match status" value="1"/>
</dbReference>
<dbReference type="PROSITE" id="PS50800">
    <property type="entry name" value="SAP"/>
    <property type="match status" value="1"/>
</dbReference>
<organism>
    <name type="scientific">Homo sapiens</name>
    <name type="common">Human</name>
    <dbReference type="NCBI Taxonomy" id="9606"/>
    <lineage>
        <taxon>Eukaryota</taxon>
        <taxon>Metazoa</taxon>
        <taxon>Chordata</taxon>
        <taxon>Craniata</taxon>
        <taxon>Vertebrata</taxon>
        <taxon>Euteleostomi</taxon>
        <taxon>Mammalia</taxon>
        <taxon>Eutheria</taxon>
        <taxon>Euarchontoglires</taxon>
        <taxon>Primates</taxon>
        <taxon>Haplorrhini</taxon>
        <taxon>Catarrhini</taxon>
        <taxon>Hominidae</taxon>
        <taxon>Homo</taxon>
    </lineage>
</organism>
<feature type="initiator methionine" description="Removed" evidence="42 50 51 66 69 70 71 72">
    <location>
        <position position="1"/>
    </location>
</feature>
<feature type="chain" id="PRO_0000081872" description="Heterogeneous nuclear ribonucleoprotein U">
    <location>
        <begin position="2"/>
        <end position="825"/>
    </location>
</feature>
<feature type="domain" description="SAP" evidence="4 9 48">
    <location>
        <begin position="8"/>
        <end position="42"/>
    </location>
</feature>
<feature type="domain" description="B30.2/SPRY" evidence="5">
    <location>
        <begin position="267"/>
        <end position="464"/>
    </location>
</feature>
<feature type="region of interest" description="Disordered" evidence="6">
    <location>
        <begin position="41"/>
        <end position="281"/>
    </location>
</feature>
<feature type="region of interest" description="ATPase domain" evidence="39">
    <location>
        <begin position="488"/>
        <end position="672"/>
    </location>
</feature>
<feature type="region of interest" description="Actin-binding" evidence="16">
    <location>
        <begin position="611"/>
        <end position="626"/>
    </location>
</feature>
<feature type="region of interest" description="Disordered" evidence="6">
    <location>
        <begin position="671"/>
        <end position="749"/>
    </location>
</feature>
<feature type="region of interest" description="RNA-binding RGG-box" evidence="13 17">
    <location>
        <begin position="714"/>
        <end position="739"/>
    </location>
</feature>
<feature type="region of interest" description="Disordered" evidence="6">
    <location>
        <begin position="769"/>
        <end position="799"/>
    </location>
</feature>
<feature type="compositionally biased region" description="Low complexity" evidence="6">
    <location>
        <begin position="72"/>
        <end position="81"/>
    </location>
</feature>
<feature type="compositionally biased region" description="Acidic residues" evidence="6">
    <location>
        <begin position="82"/>
        <end position="95"/>
    </location>
</feature>
<feature type="compositionally biased region" description="Acidic residues" evidence="6">
    <location>
        <begin position="120"/>
        <end position="134"/>
    </location>
</feature>
<feature type="compositionally biased region" description="Acidic residues" evidence="6">
    <location>
        <begin position="140"/>
        <end position="153"/>
    </location>
</feature>
<feature type="compositionally biased region" description="Low complexity" evidence="6">
    <location>
        <begin position="159"/>
        <end position="178"/>
    </location>
</feature>
<feature type="compositionally biased region" description="Low complexity" evidence="6">
    <location>
        <begin position="199"/>
        <end position="211"/>
    </location>
</feature>
<feature type="compositionally biased region" description="Basic and acidic residues" evidence="6">
    <location>
        <begin position="233"/>
        <end position="266"/>
    </location>
</feature>
<feature type="compositionally biased region" description="Basic and acidic residues" evidence="6">
    <location>
        <begin position="671"/>
        <end position="683"/>
    </location>
</feature>
<feature type="compositionally biased region" description="Gly residues" evidence="6">
    <location>
        <begin position="710"/>
        <end position="728"/>
    </location>
</feature>
<feature type="compositionally biased region" description="Gly residues" evidence="6">
    <location>
        <begin position="739"/>
        <end position="749"/>
    </location>
</feature>
<feature type="compositionally biased region" description="Low complexity" evidence="6">
    <location>
        <begin position="778"/>
        <end position="799"/>
    </location>
</feature>
<feature type="binding site" evidence="3">
    <location>
        <begin position="504"/>
        <end position="511"/>
    </location>
    <ligand>
        <name>ATP</name>
        <dbReference type="ChEBI" id="CHEBI:30616"/>
    </ligand>
</feature>
<feature type="site" description="Cleavage; by CASP3" evidence="8 48">
    <location>
        <begin position="100"/>
        <end position="101"/>
    </location>
</feature>
<feature type="modified residue" description="N-acetylserine; partial" evidence="50 51 66 69 70 71 72">
    <location>
        <position position="2"/>
    </location>
</feature>
<feature type="modified residue" description="Phosphoserine" evidence="69 70 73">
    <location>
        <position position="4"/>
    </location>
</feature>
<feature type="modified residue" description="N6-acetyllysine" evidence="2">
    <location>
        <position position="17"/>
    </location>
</feature>
<feature type="modified residue" description="N6-acetyllysine" evidence="2">
    <location>
        <position position="21"/>
    </location>
</feature>
<feature type="modified residue" description="Phosphoserine; by PLK1" evidence="35 62 64 68 69 70 73 75">
    <location>
        <position position="59"/>
    </location>
</feature>
<feature type="modified residue" description="Phosphoserine" evidence="64 68 69 70 73">
    <location>
        <position position="66"/>
    </location>
</feature>
<feature type="modified residue" description="N6-acetyllysine" evidence="2">
    <location>
        <position position="186"/>
    </location>
</feature>
<feature type="modified residue" description="ADP-ribosylserine" evidence="38">
    <location>
        <position position="187"/>
    </location>
</feature>
<feature type="modified residue" description="Citrulline" evidence="2">
    <location>
        <position position="255"/>
    </location>
</feature>
<feature type="modified residue" description="N6-acetyllysine; alternate" evidence="67">
    <location>
        <position position="265"/>
    </location>
</feature>
<feature type="modified residue" description="Phosphotyrosine" evidence="2">
    <location>
        <position position="266"/>
    </location>
</feature>
<feature type="modified residue" description="Phosphoserine" evidence="73">
    <location>
        <position position="267"/>
    </location>
</feature>
<feature type="modified residue" description="Phosphoserine" evidence="62 63 65 68 69 73 75">
    <location>
        <position position="271"/>
    </location>
</feature>
<feature type="modified residue" description="Phosphothreonine" evidence="75">
    <location>
        <position position="286"/>
    </location>
</feature>
<feature type="modified residue" description="N6-acetyllysine" evidence="67">
    <location>
        <position position="352"/>
    </location>
</feature>
<feature type="modified residue" description="N6-acetyllysine; alternate" evidence="67">
    <location>
        <position position="516"/>
    </location>
</feature>
<feature type="modified residue" description="N6-acetyllysine; alternate" evidence="67">
    <location>
        <position position="524"/>
    </location>
</feature>
<feature type="modified residue" description="Phosphothreonine" evidence="73">
    <location>
        <position position="532"/>
    </location>
</feature>
<feature type="modified residue" description="N6-acetyllysine" evidence="67">
    <location>
        <position position="551"/>
    </location>
</feature>
<feature type="modified residue" description="N6-acetyllysine; alternate" evidence="67">
    <location>
        <position position="565"/>
    </location>
</feature>
<feature type="modified residue" description="Phosphothreonine" evidence="73">
    <location>
        <position position="582"/>
    </location>
</feature>
<feature type="modified residue" description="N6-acetyllysine; alternate" evidence="67">
    <location>
        <position position="635"/>
    </location>
</feature>
<feature type="modified residue" description="Omega-N-methylarginine" evidence="74">
    <location>
        <position position="702"/>
    </location>
</feature>
<feature type="modified residue" description="Asymmetric dimethylarginine" evidence="2">
    <location>
        <position position="715"/>
    </location>
</feature>
<feature type="modified residue" description="Asymmetric dimethylarginine" evidence="2">
    <location>
        <position position="720"/>
    </location>
</feature>
<feature type="modified residue" description="Asymmetric dimethylarginine" evidence="2">
    <location>
        <position position="727"/>
    </location>
</feature>
<feature type="modified residue" description="Asymmetric dimethylarginine; alternate" evidence="74">
    <location>
        <position position="733"/>
    </location>
</feature>
<feature type="modified residue" description="Omega-N-methylarginine; alternate" evidence="2">
    <location>
        <position position="733"/>
    </location>
</feature>
<feature type="modified residue" description="Asymmetric dimethylarginine; alternate" evidence="74">
    <location>
        <position position="739"/>
    </location>
</feature>
<feature type="modified residue" description="Dimethylated arginine; in A2780 ovarian carcinoma cell line" evidence="51">
    <location>
        <position position="739"/>
    </location>
</feature>
<feature type="modified residue" description="Omega-N-methylarginine; alternate" evidence="74">
    <location>
        <position position="739"/>
    </location>
</feature>
<feature type="modified residue" description="Asymmetric dimethylarginine" evidence="74">
    <location>
        <position position="755"/>
    </location>
</feature>
<feature type="modified residue" description="Asymmetric dimethylarginine" evidence="74">
    <location>
        <position position="762"/>
    </location>
</feature>
<feature type="modified residue" description="N6-acetyllysine; alternate" evidence="67">
    <location>
        <position position="814"/>
    </location>
</feature>
<feature type="cross-link" description="Glycyl lysine isopeptide (Lys-Gly) (interchain with G-Cter in SUMO1); alternate" evidence="76">
    <location>
        <position position="265"/>
    </location>
</feature>
<feature type="cross-link" description="Glycyl lysine isopeptide (Lys-Gly) (interchain with G-Cter in SUMO2); alternate" evidence="76 77 78">
    <location>
        <position position="265"/>
    </location>
</feature>
<feature type="cross-link" description="Glycyl lysine isopeptide (Lys-Gly) (interchain with G-Cter in SUMO2)" evidence="78">
    <location>
        <position position="495"/>
    </location>
</feature>
<feature type="cross-link" description="Glycyl lysine isopeptide (Lys-Gly) (interchain with G-Cter in SUMO2); alternate" evidence="78">
    <location>
        <position position="516"/>
    </location>
</feature>
<feature type="cross-link" description="Glycyl lysine isopeptide (Lys-Gly) (interchain with G-Cter in SUMO2); alternate" evidence="78">
    <location>
        <position position="524"/>
    </location>
</feature>
<feature type="cross-link" description="Glycyl lysine isopeptide (Lys-Gly) (interchain with G-Cter in SUMO2)" evidence="78">
    <location>
        <position position="536"/>
    </location>
</feature>
<feature type="cross-link" description="Glycyl lysine isopeptide (Lys-Gly) (interchain with G-Cter in SUMO2); alternate" evidence="78">
    <location>
        <position position="565"/>
    </location>
</feature>
<feature type="cross-link" description="Glycyl lysine isopeptide (Lys-Gly) (interchain with G-Cter in SUMO2)" evidence="78">
    <location>
        <position position="574"/>
    </location>
</feature>
<feature type="cross-link" description="Glycyl lysine isopeptide (Lys-Gly) (interchain with G-Cter in SUMO2)" evidence="77 78">
    <location>
        <position position="609"/>
    </location>
</feature>
<feature type="cross-link" description="Glycyl lysine isopeptide (Lys-Gly) (interchain with G-Cter in SUMO2)" evidence="78">
    <location>
        <position position="626"/>
    </location>
</feature>
<feature type="cross-link" description="Glycyl lysine isopeptide (Lys-Gly) (interchain with G-Cter in SUMO2); alternate" evidence="78">
    <location>
        <position position="635"/>
    </location>
</feature>
<feature type="cross-link" description="Glycyl lysine isopeptide (Lys-Gly) (interchain with G-Cter in SUMO2)" evidence="78">
    <location>
        <position position="664"/>
    </location>
</feature>
<feature type="cross-link" description="Glycyl lysine isopeptide (Lys-Gly) (interchain with G-Cter in SUMO2)" evidence="77 78">
    <location>
        <position position="670"/>
    </location>
</feature>
<feature type="cross-link" description="Glycyl lysine isopeptide (Lys-Gly) (interchain with G-Cter in SUMO2); alternate" evidence="78">
    <location>
        <position position="814"/>
    </location>
</feature>
<feature type="splice variant" id="VSP_005846" description="In isoform 2." evidence="53 54 55">
    <location>
        <begin position="213"/>
        <end position="231"/>
    </location>
</feature>
<feature type="sequence variant" id="VAR_078622" description="In DEE54." evidence="32">
    <location>
        <begin position="171"/>
        <end position="825"/>
    </location>
</feature>
<feature type="sequence variant" id="VAR_014712" description="In dbSNP:rs1052660." evidence="17 49">
    <original>F</original>
    <variation>L</variation>
    <location>
        <position position="712"/>
    </location>
</feature>
<feature type="sequence variant" id="VAR_078623" description="In DEE54; uncertain significance." evidence="30">
    <location>
        <begin position="805"/>
        <end position="825"/>
    </location>
</feature>
<feature type="mutagenesis site" description="No change in interaction with AURKA, PLK1 and TPX2. Increases mitotic chromosome misalignment and chromosome segregation defects and time required to progress through mitosis." evidence="19">
    <original>S</original>
    <variation>A</variation>
    <location>
        <position position="59"/>
    </location>
</feature>
<feature type="mutagenesis site" description="Increases mitotic chromosome misalignment and chromosome segregation defects and decreases time required to progress through mitosis." evidence="19">
    <original>S</original>
    <variation>E</variation>
    <location>
        <position position="59"/>
    </location>
</feature>
<feature type="mutagenesis site" description="No cleavage by caspases during apoptosis. Inhibits CASP3-induced cleavage in vitro." evidence="8">
    <original>D</original>
    <variation>A</variation>
    <location>
        <position position="100"/>
    </location>
</feature>
<feature type="mutagenesis site" description="Loss of actin-binding." evidence="16">
    <original>RTQKK</original>
    <variation>ATQAA</variation>
    <location>
        <begin position="616"/>
        <end position="620"/>
    </location>
</feature>
<feature type="sequence conflict" description="In Ref. 5; AAH07950." evidence="60" ref="5">
    <original>A</original>
    <variation>V</variation>
    <location>
        <position position="603"/>
    </location>
</feature>
<feature type="modified residue" description="N6-acetyllysine" evidence="67">
    <location sequence="Q00839-2">
        <position position="215"/>
    </location>
</feature>
<proteinExistence type="evidence at protein level"/>
<gene>
    <name evidence="61" type="primary">HNRNPU</name>
    <name evidence="61" type="synonym">C1orf199</name>
    <name evidence="61" type="synonym">HNRPU</name>
    <name type="synonym">SAFA</name>
    <name type="synonym">U21.1</name>
</gene>
<sequence>MSSSPVNVKKLKVSELKEELKKRRLSDKGLKAELMERLQAALDDEEAGGRPAMEPGNGSLDLGGDSAGRSGAGLEQEAAAGGDEEEEEEEEEEEGISALDGDQMELGEENGAAGAADSGPMEEEEAASEDENGDDQGFQEGEDELGDEEEGAGDENGHGEQQPQPPATQQQQPQQQRGAAKEAAGKSSGPTSLFAVTVAPPGARQGQQQAGGKKKAEGGGGGGRPGAPAAGDGKTEQKGGDKKRGVKRPREDHGRGYFEYIEENKYSRAKSPQPPVEEEDEHFDDTVVCLDTYNCDLHFKISRDRLSASSLTMESFAFLWAGGRASYGVSKGKVCFEMKVTEKIPVRHLYTKDIDIHEVRIGWSLTTSGMLLGEEEFSYGYSLKGIKTCNCETEDYGEKFDENDVITCFANFESDEVELSYAKNGQDLGVAFKISKEVLAGRPLFPHVLCHNCAVEFNFGQKEKPYFPIPEEYTFIQNVPLEDRVRGPKGPEEKKDCEVVMMIGLPGAGKTTWVTKHAAENPGKYNILGTNTIMDKMMVAGFKKQMADTGKLNTLLQRAPQCLGKFIEIAARKKRNFILDQTNVSAAAQRRKMCLFAGFQRKAVVVCPKDEDYKQRTQKKAEVEGKDLPEHAVLKMKGNFTLPEVAECFDEITYVELQKEEAQKLLEQYKEESKKALPPEKKQNTGSKKSNKNKSGKNQFNRGGGHRGRGGFNMRGGNFRGGAPGNRGGYNRRGNMPQRGGGGGGSGGIGYPYPRAPVFPGRGSYSNRGNYNRGGMPNRGNYNQNFRGRGNNRGYKNQSQGYNQWQQGQFWGQKPWSQHYHQGYY</sequence>
<evidence type="ECO:0000250" key="1">
    <source>
        <dbReference type="UniProtKB" id="Q6IMY8"/>
    </source>
</evidence>
<evidence type="ECO:0000250" key="2">
    <source>
        <dbReference type="UniProtKB" id="Q8VEK3"/>
    </source>
</evidence>
<evidence type="ECO:0000255" key="3"/>
<evidence type="ECO:0000255" key="4">
    <source>
        <dbReference type="PROSITE-ProRule" id="PRU00186"/>
    </source>
</evidence>
<evidence type="ECO:0000255" key="5">
    <source>
        <dbReference type="PROSITE-ProRule" id="PRU00548"/>
    </source>
</evidence>
<evidence type="ECO:0000256" key="6">
    <source>
        <dbReference type="SAM" id="MobiDB-lite"/>
    </source>
</evidence>
<evidence type="ECO:0000269" key="7">
    <source>
    </source>
</evidence>
<evidence type="ECO:0000269" key="8">
    <source>
    </source>
</evidence>
<evidence type="ECO:0000269" key="9">
    <source>
    </source>
</evidence>
<evidence type="ECO:0000269" key="10">
    <source>
    </source>
</evidence>
<evidence type="ECO:0000269" key="11">
    <source>
    </source>
</evidence>
<evidence type="ECO:0000269" key="12">
    <source>
    </source>
</evidence>
<evidence type="ECO:0000269" key="13">
    <source>
    </source>
</evidence>
<evidence type="ECO:0000269" key="14">
    <source>
    </source>
</evidence>
<evidence type="ECO:0000269" key="15">
    <source>
    </source>
</evidence>
<evidence type="ECO:0000269" key="16">
    <source>
    </source>
</evidence>
<evidence type="ECO:0000269" key="17">
    <source>
    </source>
</evidence>
<evidence type="ECO:0000269" key="18">
    <source>
    </source>
</evidence>
<evidence type="ECO:0000269" key="19">
    <source>
    </source>
</evidence>
<evidence type="ECO:0000269" key="20">
    <source>
    </source>
</evidence>
<evidence type="ECO:0000269" key="21">
    <source>
    </source>
</evidence>
<evidence type="ECO:0000269" key="22">
    <source>
    </source>
</evidence>
<evidence type="ECO:0000269" key="23">
    <source>
    </source>
</evidence>
<evidence type="ECO:0000269" key="24">
    <source>
    </source>
</evidence>
<evidence type="ECO:0000269" key="25">
    <source>
    </source>
</evidence>
<evidence type="ECO:0000269" key="26">
    <source>
    </source>
</evidence>
<evidence type="ECO:0000269" key="27">
    <source>
    </source>
</evidence>
<evidence type="ECO:0000269" key="28">
    <source>
    </source>
</evidence>
<evidence type="ECO:0000269" key="29">
    <source>
    </source>
</evidence>
<evidence type="ECO:0000269" key="30">
    <source>
    </source>
</evidence>
<evidence type="ECO:0000269" key="31">
    <source>
    </source>
</evidence>
<evidence type="ECO:0000269" key="32">
    <source>
    </source>
</evidence>
<evidence type="ECO:0000269" key="33">
    <source>
    </source>
</evidence>
<evidence type="ECO:0000269" key="34">
    <source>
    </source>
</evidence>
<evidence type="ECO:0000269" key="35">
    <source>
    </source>
</evidence>
<evidence type="ECO:0000269" key="36">
    <source>
    </source>
</evidence>
<evidence type="ECO:0000269" key="37">
    <source>
    </source>
</evidence>
<evidence type="ECO:0000269" key="38">
    <source>
    </source>
</evidence>
<evidence type="ECO:0000269" key="39">
    <source>
    </source>
</evidence>
<evidence type="ECO:0000269" key="40">
    <source>
    </source>
</evidence>
<evidence type="ECO:0000269" key="41">
    <source>
    </source>
</evidence>
<evidence type="ECO:0000269" key="42">
    <source>
    </source>
</evidence>
<evidence type="ECO:0000269" key="43">
    <source>
    </source>
</evidence>
<evidence type="ECO:0000269" key="44">
    <source>
    </source>
</evidence>
<evidence type="ECO:0000269" key="45">
    <source>
    </source>
</evidence>
<evidence type="ECO:0000269" key="46">
    <source>
    </source>
</evidence>
<evidence type="ECO:0000269" key="47">
    <source>
    </source>
</evidence>
<evidence type="ECO:0000269" key="48">
    <source>
    </source>
</evidence>
<evidence type="ECO:0000269" key="49">
    <source ref="3"/>
</evidence>
<evidence type="ECO:0000269" key="50">
    <source ref="7"/>
</evidence>
<evidence type="ECO:0000269" key="51">
    <source ref="8"/>
</evidence>
<evidence type="ECO:0000303" key="52">
    <source>
    </source>
</evidence>
<evidence type="ECO:0000303" key="53">
    <source>
    </source>
</evidence>
<evidence type="ECO:0000303" key="54">
    <source>
    </source>
</evidence>
<evidence type="ECO:0000303" key="55">
    <source>
    </source>
</evidence>
<evidence type="ECO:0000303" key="56">
    <source>
    </source>
</evidence>
<evidence type="ECO:0000303" key="57">
    <source>
    </source>
</evidence>
<evidence type="ECO:0000303" key="58">
    <source>
    </source>
</evidence>
<evidence type="ECO:0000303" key="59">
    <source ref="3"/>
</evidence>
<evidence type="ECO:0000305" key="60"/>
<evidence type="ECO:0000312" key="61">
    <source>
        <dbReference type="HGNC" id="HGNC:5048"/>
    </source>
</evidence>
<evidence type="ECO:0007744" key="62">
    <source>
    </source>
</evidence>
<evidence type="ECO:0007744" key="63">
    <source>
    </source>
</evidence>
<evidence type="ECO:0007744" key="64">
    <source>
    </source>
</evidence>
<evidence type="ECO:0007744" key="65">
    <source>
    </source>
</evidence>
<evidence type="ECO:0007744" key="66">
    <source>
    </source>
</evidence>
<evidence type="ECO:0007744" key="67">
    <source>
    </source>
</evidence>
<evidence type="ECO:0007744" key="68">
    <source>
    </source>
</evidence>
<evidence type="ECO:0007744" key="69">
    <source>
    </source>
</evidence>
<evidence type="ECO:0007744" key="70">
    <source>
    </source>
</evidence>
<evidence type="ECO:0007744" key="71">
    <source>
    </source>
</evidence>
<evidence type="ECO:0007744" key="72">
    <source>
    </source>
</evidence>
<evidence type="ECO:0007744" key="73">
    <source>
    </source>
</evidence>
<evidence type="ECO:0007744" key="74">
    <source>
    </source>
</evidence>
<evidence type="ECO:0007744" key="75">
    <source>
    </source>
</evidence>
<evidence type="ECO:0007744" key="76">
    <source>
    </source>
</evidence>
<evidence type="ECO:0007744" key="77">
    <source>
    </source>
</evidence>
<evidence type="ECO:0007744" key="78">
    <source>
    </source>
</evidence>